<evidence type="ECO:0000250" key="1">
    <source>
        <dbReference type="UniProtKB" id="E9PZQ0"/>
    </source>
</evidence>
<evidence type="ECO:0000250" key="2">
    <source>
        <dbReference type="UniProtKB" id="F1LMY4"/>
    </source>
</evidence>
<evidence type="ECO:0000250" key="3">
    <source>
        <dbReference type="UniProtKB" id="P21817"/>
    </source>
</evidence>
<evidence type="ECO:0000255" key="4">
    <source>
        <dbReference type="PROSITE-ProRule" id="PRU00131"/>
    </source>
</evidence>
<evidence type="ECO:0000255" key="5">
    <source>
        <dbReference type="PROSITE-ProRule" id="PRU00448"/>
    </source>
</evidence>
<evidence type="ECO:0000255" key="6">
    <source>
        <dbReference type="PROSITE-ProRule" id="PRU00548"/>
    </source>
</evidence>
<evidence type="ECO:0000256" key="7">
    <source>
        <dbReference type="SAM" id="MobiDB-lite"/>
    </source>
</evidence>
<evidence type="ECO:0000269" key="8">
    <source>
    </source>
</evidence>
<evidence type="ECO:0000269" key="9">
    <source>
    </source>
</evidence>
<evidence type="ECO:0000269" key="10">
    <source>
    </source>
</evidence>
<evidence type="ECO:0000269" key="11">
    <source>
    </source>
</evidence>
<evidence type="ECO:0000269" key="12">
    <source>
    </source>
</evidence>
<evidence type="ECO:0000269" key="13">
    <source>
    </source>
</evidence>
<evidence type="ECO:0000269" key="14">
    <source>
    </source>
</evidence>
<evidence type="ECO:0000269" key="15">
    <source>
    </source>
</evidence>
<evidence type="ECO:0000269" key="16">
    <source>
    </source>
</evidence>
<evidence type="ECO:0000269" key="17">
    <source>
    </source>
</evidence>
<evidence type="ECO:0000269" key="18">
    <source>
    </source>
</evidence>
<evidence type="ECO:0000269" key="19">
    <source>
    </source>
</evidence>
<evidence type="ECO:0000269" key="20">
    <source>
    </source>
</evidence>
<evidence type="ECO:0000269" key="21">
    <source>
    </source>
</evidence>
<evidence type="ECO:0000269" key="22">
    <source>
    </source>
</evidence>
<evidence type="ECO:0000269" key="23">
    <source>
    </source>
</evidence>
<evidence type="ECO:0000269" key="24">
    <source>
    </source>
</evidence>
<evidence type="ECO:0000269" key="25">
    <source>
    </source>
</evidence>
<evidence type="ECO:0000269" key="26">
    <source>
    </source>
</evidence>
<evidence type="ECO:0000269" key="27">
    <source>
    </source>
</evidence>
<evidence type="ECO:0000269" key="28">
    <source>
    </source>
</evidence>
<evidence type="ECO:0000269" key="29">
    <source>
    </source>
</evidence>
<evidence type="ECO:0000269" key="30">
    <source>
    </source>
</evidence>
<evidence type="ECO:0000269" key="31">
    <source>
    </source>
</evidence>
<evidence type="ECO:0000269" key="32">
    <source>
    </source>
</evidence>
<evidence type="ECO:0000269" key="33">
    <source>
    </source>
</evidence>
<evidence type="ECO:0000269" key="34">
    <source>
    </source>
</evidence>
<evidence type="ECO:0000269" key="35">
    <source>
    </source>
</evidence>
<evidence type="ECO:0000303" key="36">
    <source>
    </source>
</evidence>
<evidence type="ECO:0000305" key="37"/>
<evidence type="ECO:0000305" key="38">
    <source>
    </source>
</evidence>
<evidence type="ECO:0000305" key="39">
    <source>
    </source>
</evidence>
<evidence type="ECO:0000305" key="40">
    <source>
    </source>
</evidence>
<evidence type="ECO:0000305" key="41">
    <source>
    </source>
</evidence>
<evidence type="ECO:0000305" key="42">
    <source>
    </source>
</evidence>
<evidence type="ECO:0000305" key="43">
    <source>
    </source>
</evidence>
<evidence type="ECO:0000305" key="44">
    <source>
    </source>
</evidence>
<evidence type="ECO:0007744" key="45">
    <source>
        <dbReference type="PDB" id="3J8H"/>
    </source>
</evidence>
<evidence type="ECO:0007744" key="46">
    <source>
        <dbReference type="PDB" id="3RQR"/>
    </source>
</evidence>
<evidence type="ECO:0007744" key="47">
    <source>
        <dbReference type="PDB" id="4ERT"/>
    </source>
</evidence>
<evidence type="ECO:0007744" key="48">
    <source>
        <dbReference type="PDB" id="4ESU"/>
    </source>
</evidence>
<evidence type="ECO:0007744" key="49">
    <source>
        <dbReference type="PDB" id="4ETU"/>
    </source>
</evidence>
<evidence type="ECO:0007744" key="50">
    <source>
        <dbReference type="PDB" id="4I0Y"/>
    </source>
</evidence>
<evidence type="ECO:0007744" key="51">
    <source>
        <dbReference type="PDB" id="4I1E"/>
    </source>
</evidence>
<evidence type="ECO:0007744" key="52">
    <source>
        <dbReference type="PDB" id="4I2S"/>
    </source>
</evidence>
<evidence type="ECO:0007744" key="53">
    <source>
        <dbReference type="PDB" id="4I37"/>
    </source>
</evidence>
<evidence type="ECO:0007744" key="54">
    <source>
        <dbReference type="PDB" id="4I3N"/>
    </source>
</evidence>
<evidence type="ECO:0007744" key="55">
    <source>
        <dbReference type="PDB" id="4I6I"/>
    </source>
</evidence>
<evidence type="ECO:0007744" key="56">
    <source>
        <dbReference type="PDB" id="4I7I"/>
    </source>
</evidence>
<evidence type="ECO:0007744" key="57">
    <source>
        <dbReference type="PDB" id="4I8M"/>
    </source>
</evidence>
<evidence type="ECO:0007744" key="58">
    <source>
        <dbReference type="PDB" id="4I96"/>
    </source>
</evidence>
<evidence type="ECO:0007744" key="59">
    <source>
        <dbReference type="PDB" id="4P9J"/>
    </source>
</evidence>
<evidence type="ECO:0007744" key="60">
    <source>
        <dbReference type="PDB" id="4UWA"/>
    </source>
</evidence>
<evidence type="ECO:0007744" key="61">
    <source>
        <dbReference type="PDB" id="4UWE"/>
    </source>
</evidence>
<evidence type="ECO:0007744" key="62">
    <source>
        <dbReference type="PDB" id="5C30"/>
    </source>
</evidence>
<evidence type="ECO:0007744" key="63">
    <source>
        <dbReference type="PDB" id="5GKY"/>
    </source>
</evidence>
<evidence type="ECO:0007744" key="64">
    <source>
        <dbReference type="PDB" id="5GKZ"/>
    </source>
</evidence>
<evidence type="ECO:0007744" key="65">
    <source>
        <dbReference type="PDB" id="5GL0"/>
    </source>
</evidence>
<evidence type="ECO:0007744" key="66">
    <source>
        <dbReference type="PDB" id="5GL1"/>
    </source>
</evidence>
<evidence type="ECO:0007744" key="67">
    <source>
        <dbReference type="PDB" id="5J8V"/>
    </source>
</evidence>
<evidence type="ECO:0007744" key="68">
    <source>
        <dbReference type="PDB" id="5T15"/>
    </source>
</evidence>
<evidence type="ECO:0007744" key="69">
    <source>
        <dbReference type="PDB" id="5T9M"/>
    </source>
</evidence>
<evidence type="ECO:0007744" key="70">
    <source>
        <dbReference type="PDB" id="5T9V"/>
    </source>
</evidence>
<evidence type="ECO:0007744" key="71">
    <source>
        <dbReference type="PDB" id="5TA3"/>
    </source>
</evidence>
<evidence type="ECO:0007744" key="72">
    <source>
        <dbReference type="PDB" id="5TAL"/>
    </source>
</evidence>
<evidence type="ECO:0007744" key="73">
    <source>
        <dbReference type="PDB" id="5TAM"/>
    </source>
</evidence>
<evidence type="ECO:0007744" key="74">
    <source>
        <dbReference type="PDB" id="5TAN"/>
    </source>
</evidence>
<evidence type="ECO:0007744" key="75">
    <source>
        <dbReference type="PDB" id="5TAS"/>
    </source>
</evidence>
<evidence type="ECO:0007744" key="76">
    <source>
        <dbReference type="PDB" id="5TAT"/>
    </source>
</evidence>
<evidence type="ECO:0007744" key="77">
    <source>
        <dbReference type="PDB" id="5TAU"/>
    </source>
</evidence>
<evidence type="ECO:0007829" key="78">
    <source>
        <dbReference type="PDB" id="2BCX"/>
    </source>
</evidence>
<evidence type="ECO:0007829" key="79">
    <source>
        <dbReference type="PDB" id="2XOA"/>
    </source>
</evidence>
<evidence type="ECO:0007829" key="80">
    <source>
        <dbReference type="PDB" id="3HSM"/>
    </source>
</evidence>
<evidence type="ECO:0007829" key="81">
    <source>
        <dbReference type="PDB" id="3ILA"/>
    </source>
</evidence>
<evidence type="ECO:0007829" key="82">
    <source>
        <dbReference type="PDB" id="4ESU"/>
    </source>
</evidence>
<evidence type="ECO:0007829" key="83">
    <source>
        <dbReference type="PDB" id="4ETT"/>
    </source>
</evidence>
<evidence type="ECO:0007829" key="84">
    <source>
        <dbReference type="PDB" id="4I1E"/>
    </source>
</evidence>
<evidence type="ECO:0007829" key="85">
    <source>
        <dbReference type="PDB" id="4I6I"/>
    </source>
</evidence>
<evidence type="ECO:0007829" key="86">
    <source>
        <dbReference type="PDB" id="4I8M"/>
    </source>
</evidence>
<evidence type="ECO:0007829" key="87">
    <source>
        <dbReference type="PDB" id="4P9J"/>
    </source>
</evidence>
<evidence type="ECO:0007829" key="88">
    <source>
        <dbReference type="PDB" id="5C30"/>
    </source>
</evidence>
<evidence type="ECO:0007829" key="89">
    <source>
        <dbReference type="PDB" id="8DRP"/>
    </source>
</evidence>
<evidence type="ECO:0007829" key="90">
    <source>
        <dbReference type="PDB" id="8SEU"/>
    </source>
</evidence>
<evidence type="ECO:0007829" key="91">
    <source>
        <dbReference type="PDB" id="8SEW"/>
    </source>
</evidence>
<evidence type="ECO:0007829" key="92">
    <source>
        <dbReference type="PDB" id="8SEX"/>
    </source>
</evidence>
<evidence type="ECO:0007829" key="93">
    <source>
        <dbReference type="PDB" id="8SF0"/>
    </source>
</evidence>
<feature type="chain" id="PRO_0000219360" description="Ryanodine receptor 1">
    <location>
        <begin position="1"/>
        <end position="5037"/>
    </location>
</feature>
<feature type="topological domain" description="Cytoplasmic" evidence="25 26 29 30">
    <location>
        <begin position="1"/>
        <end position="4558"/>
    </location>
</feature>
<feature type="transmembrane region" description="Helical; Name=1" evidence="25 26 29 30">
    <location>
        <begin position="4559"/>
        <end position="4579"/>
    </location>
</feature>
<feature type="topological domain" description="Lumenal" evidence="25 26 29 30">
    <location>
        <begin position="4580"/>
        <end position="4640"/>
    </location>
</feature>
<feature type="transmembrane region" description="Helical; Name=2" evidence="25 26 29 30">
    <location>
        <begin position="4641"/>
        <end position="4661"/>
    </location>
</feature>
<feature type="topological domain" description="Cytoplasmic" evidence="25 26 29 30">
    <location>
        <begin position="4662"/>
        <end position="4779"/>
    </location>
</feature>
<feature type="transmembrane region" description="Helical; Name=3" evidence="25 26 29 30">
    <location>
        <begin position="4780"/>
        <end position="4802"/>
    </location>
</feature>
<feature type="topological domain" description="Lumenal" evidence="25 26 29 30">
    <location>
        <position position="4803"/>
    </location>
</feature>
<feature type="transmembrane region" description="Helical; Name=4" evidence="25 26 29 30">
    <location>
        <begin position="4804"/>
        <end position="4820"/>
    </location>
</feature>
<feature type="topological domain" description="Cytoplasmic" evidence="25 26 29 30">
    <location>
        <begin position="4821"/>
        <end position="4835"/>
    </location>
</feature>
<feature type="transmembrane region" description="Helical; Name=5" evidence="25 26 29 30">
    <location>
        <begin position="4836"/>
        <end position="4856"/>
    </location>
</feature>
<feature type="topological domain" description="Lumenal" evidence="25 26 29 30">
    <location>
        <begin position="4857"/>
        <end position="4879"/>
    </location>
</feature>
<feature type="intramembrane region" description="Pore-forming" evidence="25 26 29 30">
    <location>
        <begin position="4880"/>
        <end position="4899"/>
    </location>
</feature>
<feature type="topological domain" description="Lumenal" evidence="25 26 29 30">
    <location>
        <begin position="4900"/>
        <end position="4919"/>
    </location>
</feature>
<feature type="transmembrane region" description="Helical; Name=6" evidence="25 26 29 30">
    <location>
        <begin position="4920"/>
        <end position="4940"/>
    </location>
</feature>
<feature type="topological domain" description="Cytoplasmic" evidence="25 26 29 30">
    <location>
        <begin position="4941"/>
        <end position="5037"/>
    </location>
</feature>
<feature type="domain" description="MIR 1" evidence="4">
    <location>
        <begin position="98"/>
        <end position="153"/>
    </location>
</feature>
<feature type="domain" description="MIR 2" evidence="4">
    <location>
        <begin position="160"/>
        <end position="205"/>
    </location>
</feature>
<feature type="domain" description="MIR 3" evidence="4">
    <location>
        <begin position="211"/>
        <end position="265"/>
    </location>
</feature>
<feature type="domain" description="MIR 4" evidence="4">
    <location>
        <begin position="271"/>
        <end position="334"/>
    </location>
</feature>
<feature type="domain" description="MIR 5" evidence="4">
    <location>
        <begin position="336"/>
        <end position="394"/>
    </location>
</feature>
<feature type="domain" description="B30.2/SPRY 1" evidence="6">
    <location>
        <begin position="582"/>
        <end position="798"/>
    </location>
</feature>
<feature type="repeat" description="1">
    <location>
        <begin position="842"/>
        <end position="955"/>
    </location>
</feature>
<feature type="repeat" description="2">
    <location>
        <begin position="956"/>
        <end position="1069"/>
    </location>
</feature>
<feature type="domain" description="B30.2/SPRY 2" evidence="6">
    <location>
        <begin position="1014"/>
        <end position="1209"/>
    </location>
</feature>
<feature type="repeat" description="3; truncated">
    <location>
        <begin position="1345"/>
        <end position="1360"/>
    </location>
</feature>
<feature type="domain" description="B30.2/SPRY 3" evidence="6">
    <location>
        <begin position="1358"/>
        <end position="1571"/>
    </location>
</feature>
<feature type="repeat" description="4; truncated">
    <location>
        <begin position="1373"/>
        <end position="1388"/>
    </location>
</feature>
<feature type="repeat" description="5">
    <location>
        <begin position="2726"/>
        <end position="2845"/>
    </location>
</feature>
<feature type="repeat" description="6">
    <location>
        <begin position="2846"/>
        <end position="2959"/>
    </location>
</feature>
<feature type="domain" description="EF-hand" evidence="5 30">
    <location>
        <begin position="4075"/>
        <end position="4103"/>
    </location>
</feature>
<feature type="region of interest" description="Interaction with FKBP1A" evidence="27">
    <location>
        <begin position="670"/>
        <end position="681"/>
    </location>
</feature>
<feature type="region of interest" description="6 X approximate repeats">
    <location>
        <begin position="842"/>
        <end position="2959"/>
    </location>
</feature>
<feature type="region of interest" description="Disordered" evidence="7">
    <location>
        <begin position="1308"/>
        <end position="1383"/>
    </location>
</feature>
<feature type="region of interest" description="Disordered" evidence="7">
    <location>
        <begin position="1867"/>
        <end position="1922"/>
    </location>
</feature>
<feature type="region of interest" description="Disordered" evidence="7">
    <location>
        <begin position="2390"/>
        <end position="2412"/>
    </location>
</feature>
<feature type="region of interest" description="Disordered" evidence="7">
    <location>
        <begin position="2828"/>
        <end position="2858"/>
    </location>
</feature>
<feature type="region of interest" description="Disordered" evidence="7">
    <location>
        <begin position="3478"/>
        <end position="3501"/>
    </location>
</feature>
<feature type="region of interest" description="Interaction with CALM">
    <location>
        <begin position="3614"/>
        <end position="3643"/>
    </location>
</feature>
<feature type="region of interest" description="Disordered" evidence="7">
    <location>
        <begin position="4252"/>
        <end position="4282"/>
    </location>
</feature>
<feature type="region of interest" description="Disordered" evidence="7">
    <location>
        <begin position="4381"/>
        <end position="4534"/>
    </location>
</feature>
<feature type="region of interest" description="Disordered" evidence="7">
    <location>
        <begin position="4588"/>
        <end position="4620"/>
    </location>
</feature>
<feature type="short sequence motif" description="Selectivity filter" evidence="40 42 43">
    <location>
        <begin position="4894"/>
        <end position="4900"/>
    </location>
</feature>
<feature type="compositionally biased region" description="Basic and acidic residues" evidence="7">
    <location>
        <begin position="1373"/>
        <end position="1383"/>
    </location>
</feature>
<feature type="compositionally biased region" description="Acidic residues" evidence="7">
    <location>
        <begin position="1870"/>
        <end position="1922"/>
    </location>
</feature>
<feature type="compositionally biased region" description="Acidic residues" evidence="7">
    <location>
        <begin position="4254"/>
        <end position="4266"/>
    </location>
</feature>
<feature type="compositionally biased region" description="Low complexity" evidence="7">
    <location>
        <begin position="4267"/>
        <end position="4282"/>
    </location>
</feature>
<feature type="compositionally biased region" description="Acidic residues" evidence="7">
    <location>
        <begin position="4404"/>
        <end position="4422"/>
    </location>
</feature>
<feature type="compositionally biased region" description="Acidic residues" evidence="7">
    <location>
        <begin position="4480"/>
        <end position="4512"/>
    </location>
</feature>
<feature type="compositionally biased region" description="Pro residues" evidence="7">
    <location>
        <begin position="4513"/>
        <end position="4527"/>
    </location>
</feature>
<feature type="compositionally biased region" description="Gly residues" evidence="7">
    <location>
        <begin position="4601"/>
        <end position="4615"/>
    </location>
</feature>
<feature type="binding site" evidence="43 71 72 73 74">
    <location>
        <position position="3893"/>
    </location>
    <ligand>
        <name>Ca(2+)</name>
        <dbReference type="ChEBI" id="CHEBI:29108"/>
    </ligand>
</feature>
<feature type="binding site" evidence="43 71 72 73 74">
    <location>
        <position position="3967"/>
    </location>
    <ligand>
        <name>Ca(2+)</name>
        <dbReference type="ChEBI" id="CHEBI:29108"/>
    </ligand>
</feature>
<feature type="binding site" evidence="43 70 71 72 73 74 75 76 77">
    <location>
        <begin position="4211"/>
        <end position="4215"/>
    </location>
    <ligand>
        <name>ATP</name>
        <dbReference type="ChEBI" id="CHEBI:30616"/>
    </ligand>
</feature>
<feature type="binding site" evidence="43 74">
    <location>
        <position position="4716"/>
    </location>
    <ligand>
        <name>caffeine</name>
        <dbReference type="ChEBI" id="CHEBI:27732"/>
    </ligand>
</feature>
<feature type="binding site" evidence="43 70 71 72 73 74 75 76 77">
    <location>
        <begin position="4954"/>
        <end position="4959"/>
    </location>
    <ligand>
        <name>ATP</name>
        <dbReference type="ChEBI" id="CHEBI:30616"/>
    </ligand>
</feature>
<feature type="binding site" evidence="43 70 71 72 73 74 75 76 77">
    <location>
        <begin position="4979"/>
        <end position="4985"/>
    </location>
    <ligand>
        <name>ATP</name>
        <dbReference type="ChEBI" id="CHEBI:30616"/>
    </ligand>
</feature>
<feature type="binding site" evidence="43 71 72 73 74">
    <location>
        <position position="5001"/>
    </location>
    <ligand>
        <name>Ca(2+)</name>
        <dbReference type="ChEBI" id="CHEBI:29108"/>
    </ligand>
</feature>
<feature type="modified residue" description="Phosphoserine" evidence="2">
    <location>
        <position position="1338"/>
    </location>
</feature>
<feature type="modified residue" description="Phosphoserine" evidence="2">
    <location>
        <position position="2345"/>
    </location>
</feature>
<feature type="modified residue" description="Phosphoserine; by PKA and PKG" evidence="34">
    <location>
        <position position="2843"/>
    </location>
</feature>
<feature type="modified residue" description="S-nitrosocysteine" evidence="10 12 22">
    <location>
        <position position="3635"/>
    </location>
</feature>
<feature type="modified residue" description="Phosphothreonine" evidence="2">
    <location>
        <position position="4466"/>
    </location>
</feature>
<feature type="modified residue" description="Phosphoserine" evidence="2">
    <location>
        <position position="4470"/>
    </location>
</feature>
<feature type="modified residue" description="Phosphotyrosine" evidence="3">
    <location>
        <position position="4863"/>
    </location>
</feature>
<feature type="modified residue" description="Phosphoserine" evidence="3">
    <location>
        <position position="4866"/>
    </location>
</feature>
<feature type="mutagenesis site" description="Decreases threshold for channel activation by K(+), caffeine and 4-chloro-m-cresol. Decreases inhibition by Mg(2+)." evidence="15">
    <original>R</original>
    <variation>C</variation>
    <location>
        <position position="164"/>
    </location>
</feature>
<feature type="mutagenesis site" description="Decreases threshold for channel activation by K(+), caffeine and 4-chloro-m-cresol. Decreases inhibition by Mg(2+)." evidence="15">
    <original>G</original>
    <variation>R</variation>
    <location>
        <position position="342"/>
    </location>
</feature>
<feature type="mutagenesis site" description="Decreases threshold for channel activation by K(+), caffeine and 4-chloro-m-cresol. Decreases inhibition by Mg(2+)." evidence="15">
    <original>R</original>
    <variation>C</variation>
    <location>
        <position position="615"/>
    </location>
</feature>
<feature type="mutagenesis site" description="Loss of interaction with FKBP1A." evidence="27">
    <original>FL</original>
    <variation>AA</variation>
    <location>
        <begin position="674"/>
        <end position="675"/>
    </location>
</feature>
<feature type="mutagenesis site" description="Impairs interaction with FKBP1A." evidence="27">
    <original>N</original>
    <variation>D</variation>
    <location>
        <position position="760"/>
    </location>
</feature>
<feature type="mutagenesis site" description="Decreases protein stability." evidence="27">
    <original>R</original>
    <variation>C</variation>
    <location>
        <position position="1044"/>
    </location>
</feature>
<feature type="mutagenesis site" description="Decreases protein stability." evidence="27">
    <original>G</original>
    <variation>S</variation>
    <location>
        <position position="1050"/>
    </location>
</feature>
<feature type="mutagenesis site" description="Decreases protein stability." evidence="24">
    <original>R</original>
    <variation>W</variation>
    <location>
        <position position="1076"/>
    </location>
</feature>
<feature type="mutagenesis site" description="Decreases threshold for channel activation by K(+), caffeine and 4-chloro-m-cresol. Decreases inhibition by Mg(2+)." evidence="15">
    <original>R</original>
    <variation>C</variation>
    <location>
        <position position="2163"/>
    </location>
</feature>
<feature type="mutagenesis site" description="Decreases threshold for channel activation by K(+), caffeine and 4-chloro-m-cresol. Decreases inhibition by Mg(2+)." evidence="15">
    <original>V</original>
    <variation>M</variation>
    <location>
        <position position="2168"/>
    </location>
</feature>
<feature type="mutagenesis site" description="Decreases threshold for channel activation by K(+), caffeine and 4-chloro-m-cresol. Decreases inhibition by Mg(2+)." evidence="15">
    <original>R</original>
    <variation>H</variation>
    <location>
        <position position="2458"/>
    </location>
</feature>
<feature type="mutagenesis site" description="Impairs interaction with FKBP1A." evidence="27">
    <original>V</original>
    <variation>G</variation>
    <location>
        <position position="2461"/>
    </location>
</feature>
<feature type="mutagenesis site" description="Decreases protein stability." evidence="23">
    <original>L</original>
    <variation>G</variation>
    <location>
        <position position="2867"/>
    </location>
</feature>
<feature type="mutagenesis site" description="Abolishes S-nitrosocysteine formation." evidence="12 22">
    <original>C</original>
    <variation>A</variation>
    <location>
        <position position="3635"/>
    </location>
</feature>
<feature type="mutagenesis site" description="Decreases threshold for channel activation by K(+), caffeine and 4-chloro-m-cresol. Decreases inhibition by Mg(2+)." evidence="15">
    <original>T</original>
    <variation>I</variation>
    <location>
        <position position="4825"/>
    </location>
</feature>
<feature type="mutagenesis site" description="Loss of channel activation by halothane and caffeine due to Ca(2+) store depletion, probably due to constant Ca(2+) leakage through the mutant channel." evidence="8">
    <original>I</original>
    <variation>T</variation>
    <location>
        <position position="4897"/>
    </location>
</feature>
<feature type="sequence conflict" description="In Ref. 2; no nucleotide entry." evidence="37" ref="2">
    <original>E</original>
    <variation>D</variation>
    <location>
        <position position="2015"/>
    </location>
</feature>
<feature type="sequence conflict" description="In Ref. 2; no nucleotide entry." evidence="37" ref="2">
    <location>
        <begin position="3481"/>
        <end position="3485"/>
    </location>
</feature>
<feature type="strand" evidence="84">
    <location>
        <begin position="19"/>
        <end position="28"/>
    </location>
</feature>
<feature type="strand" evidence="84">
    <location>
        <begin position="31"/>
        <end position="38"/>
    </location>
</feature>
<feature type="strand" evidence="80">
    <location>
        <begin position="42"/>
        <end position="44"/>
    </location>
</feature>
<feature type="strand" evidence="84">
    <location>
        <begin position="48"/>
        <end position="51"/>
    </location>
</feature>
<feature type="turn" evidence="84">
    <location>
        <begin position="53"/>
        <end position="57"/>
    </location>
</feature>
<feature type="turn" evidence="84">
    <location>
        <begin position="63"/>
        <end position="65"/>
    </location>
</feature>
<feature type="strand" evidence="84">
    <location>
        <begin position="67"/>
        <end position="73"/>
    </location>
</feature>
<feature type="helix" evidence="84">
    <location>
        <begin position="75"/>
        <end position="83"/>
    </location>
</feature>
<feature type="strand" evidence="84">
    <location>
        <begin position="106"/>
        <end position="111"/>
    </location>
</feature>
<feature type="turn" evidence="84">
    <location>
        <begin position="112"/>
        <end position="114"/>
    </location>
</feature>
<feature type="strand" evidence="84">
    <location>
        <begin position="117"/>
        <end position="120"/>
    </location>
</feature>
<feature type="strand" evidence="84">
    <location>
        <begin position="133"/>
        <end position="140"/>
    </location>
</feature>
<feature type="helix" evidence="85">
    <location>
        <begin position="144"/>
        <end position="146"/>
    </location>
</feature>
<feature type="strand" evidence="84">
    <location>
        <begin position="147"/>
        <end position="154"/>
    </location>
</feature>
<feature type="strand" evidence="81">
    <location>
        <begin position="164"/>
        <end position="166"/>
    </location>
</feature>
<feature type="strand" evidence="84">
    <location>
        <begin position="168"/>
        <end position="173"/>
    </location>
</feature>
<feature type="turn" evidence="84">
    <location>
        <begin position="174"/>
        <end position="176"/>
    </location>
</feature>
<feature type="strand" evidence="84">
    <location>
        <begin position="179"/>
        <end position="183"/>
    </location>
</feature>
<feature type="strand" evidence="86">
    <location>
        <begin position="186"/>
        <end position="188"/>
    </location>
</feature>
<feature type="strand" evidence="84">
    <location>
        <begin position="190"/>
        <end position="196"/>
    </location>
</feature>
<feature type="strand" evidence="84">
    <location>
        <begin position="200"/>
        <end position="206"/>
    </location>
</feature>
<feature type="strand" evidence="84">
    <location>
        <begin position="219"/>
        <end position="223"/>
    </location>
</feature>
<feature type="strand" evidence="84">
    <location>
        <begin position="225"/>
        <end position="233"/>
    </location>
</feature>
<feature type="turn" evidence="84">
    <location>
        <begin position="239"/>
        <end position="242"/>
    </location>
</feature>
<feature type="strand" evidence="84">
    <location>
        <begin position="245"/>
        <end position="250"/>
    </location>
</feature>
<feature type="helix" evidence="84">
    <location>
        <begin position="251"/>
        <end position="254"/>
    </location>
</feature>
<feature type="helix" evidence="84">
    <location>
        <begin position="256"/>
        <end position="258"/>
    </location>
</feature>
<feature type="strand" evidence="84">
    <location>
        <begin position="260"/>
        <end position="265"/>
    </location>
</feature>
<feature type="turn" evidence="84">
    <location>
        <begin position="268"/>
        <end position="271"/>
    </location>
</feature>
<feature type="strand" evidence="84">
    <location>
        <begin position="280"/>
        <end position="284"/>
    </location>
</feature>
<feature type="turn" evidence="84">
    <location>
        <begin position="285"/>
        <end position="287"/>
    </location>
</feature>
<feature type="strand" evidence="84">
    <location>
        <begin position="290"/>
        <end position="294"/>
    </location>
</feature>
<feature type="turn" evidence="84">
    <location>
        <begin position="295"/>
        <end position="297"/>
    </location>
</feature>
<feature type="strand" evidence="84">
    <location>
        <begin position="298"/>
        <end position="302"/>
    </location>
</feature>
<feature type="helix" evidence="84">
    <location>
        <begin position="304"/>
        <end position="306"/>
    </location>
</feature>
<feature type="helix" evidence="84">
    <location>
        <begin position="309"/>
        <end position="312"/>
    </location>
</feature>
<feature type="strand" evidence="84">
    <location>
        <begin position="314"/>
        <end position="319"/>
    </location>
</feature>
<feature type="strand" evidence="79">
    <location>
        <begin position="332"/>
        <end position="334"/>
    </location>
</feature>
<feature type="turn" evidence="84">
    <location>
        <begin position="341"/>
        <end position="343"/>
    </location>
</feature>
<feature type="strand" evidence="84">
    <location>
        <begin position="346"/>
        <end position="350"/>
    </location>
</feature>
<feature type="turn" evidence="84">
    <location>
        <begin position="351"/>
        <end position="353"/>
    </location>
</feature>
<feature type="strand" evidence="84">
    <location>
        <begin position="356"/>
        <end position="359"/>
    </location>
</feature>
<feature type="strand" evidence="84">
    <location>
        <begin position="373"/>
        <end position="381"/>
    </location>
</feature>
<feature type="strand" evidence="84">
    <location>
        <begin position="388"/>
        <end position="392"/>
    </location>
</feature>
<feature type="helix" evidence="84">
    <location>
        <begin position="395"/>
        <end position="420"/>
    </location>
</feature>
<feature type="turn" evidence="84">
    <location>
        <begin position="421"/>
        <end position="423"/>
    </location>
</feature>
<feature type="helix" evidence="84">
    <location>
        <begin position="438"/>
        <end position="451"/>
    </location>
</feature>
<feature type="helix" evidence="84">
    <location>
        <begin position="461"/>
        <end position="480"/>
    </location>
</feature>
<feature type="helix" evidence="84">
    <location>
        <begin position="483"/>
        <end position="494"/>
    </location>
</feature>
<feature type="strand" evidence="84">
    <location>
        <begin position="497"/>
        <end position="499"/>
    </location>
</feature>
<feature type="helix" evidence="84">
    <location>
        <begin position="500"/>
        <end position="504"/>
    </location>
</feature>
<feature type="helix" evidence="84">
    <location>
        <begin position="509"/>
        <end position="512"/>
    </location>
</feature>
<feature type="helix" evidence="84">
    <location>
        <begin position="515"/>
        <end position="530"/>
    </location>
</feature>
<feature type="helix" evidence="88">
    <location>
        <begin position="865"/>
        <end position="867"/>
    </location>
</feature>
<feature type="helix" evidence="88">
    <location>
        <begin position="868"/>
        <end position="888"/>
    </location>
</feature>
<feature type="turn" evidence="88">
    <location>
        <begin position="899"/>
        <end position="902"/>
    </location>
</feature>
<feature type="helix" evidence="88">
    <location>
        <begin position="910"/>
        <end position="912"/>
    </location>
</feature>
<feature type="helix" evidence="88">
    <location>
        <begin position="915"/>
        <end position="934"/>
    </location>
</feature>
<feature type="strand" evidence="88">
    <location>
        <begin position="939"/>
        <end position="941"/>
    </location>
</feature>
<feature type="helix" evidence="88">
    <location>
        <begin position="946"/>
        <end position="949"/>
    </location>
</feature>
<feature type="helix" evidence="88">
    <location>
        <begin position="957"/>
        <end position="959"/>
    </location>
</feature>
<feature type="helix" evidence="88">
    <location>
        <begin position="979"/>
        <end position="990"/>
    </location>
</feature>
<feature type="strand" evidence="88">
    <location>
        <begin position="994"/>
        <end position="997"/>
    </location>
</feature>
<feature type="turn" evidence="88">
    <location>
        <begin position="998"/>
        <end position="1001"/>
    </location>
</feature>
<feature type="strand" evidence="88">
    <location>
        <begin position="1002"/>
        <end position="1005"/>
    </location>
</feature>
<feature type="strand" evidence="88">
    <location>
        <begin position="1021"/>
        <end position="1023"/>
    </location>
</feature>
<feature type="helix" evidence="88">
    <location>
        <begin position="1024"/>
        <end position="1026"/>
    </location>
</feature>
<feature type="helix" evidence="88">
    <location>
        <begin position="1029"/>
        <end position="1048"/>
    </location>
</feature>
<feature type="strand" evidence="88">
    <location>
        <begin position="1051"/>
        <end position="1053"/>
    </location>
</feature>
<feature type="strand" evidence="87">
    <location>
        <begin position="1073"/>
        <end position="1075"/>
    </location>
</feature>
<feature type="helix" evidence="87">
    <location>
        <begin position="1079"/>
        <end position="1081"/>
    </location>
</feature>
<feature type="strand" evidence="87">
    <location>
        <begin position="1083"/>
        <end position="1096"/>
    </location>
</feature>
<feature type="strand" evidence="87">
    <location>
        <begin position="1098"/>
        <end position="1105"/>
    </location>
</feature>
<feature type="strand" evidence="87">
    <location>
        <begin position="1121"/>
        <end position="1125"/>
    </location>
</feature>
<feature type="turn" evidence="87">
    <location>
        <begin position="1126"/>
        <end position="1129"/>
    </location>
</feature>
<feature type="strand" evidence="87">
    <location>
        <begin position="1130"/>
        <end position="1140"/>
    </location>
</feature>
<feature type="strand" evidence="87">
    <location>
        <begin position="1148"/>
        <end position="1154"/>
    </location>
</feature>
<feature type="turn" evidence="87">
    <location>
        <begin position="1155"/>
        <end position="1158"/>
    </location>
</feature>
<feature type="strand" evidence="87">
    <location>
        <begin position="1159"/>
        <end position="1164"/>
    </location>
</feature>
<feature type="strand" evidence="87">
    <location>
        <begin position="1178"/>
        <end position="1181"/>
    </location>
</feature>
<feature type="strand" evidence="87">
    <location>
        <begin position="1188"/>
        <end position="1194"/>
    </location>
</feature>
<feature type="strand" evidence="87">
    <location>
        <begin position="1200"/>
        <end position="1203"/>
    </location>
</feature>
<feature type="helix" evidence="87">
    <location>
        <begin position="1208"/>
        <end position="1210"/>
    </location>
</feature>
<feature type="turn" evidence="87">
    <location>
        <begin position="1214"/>
        <end position="1222"/>
    </location>
</feature>
<feature type="helix" evidence="87">
    <location>
        <begin position="1226"/>
        <end position="1229"/>
    </location>
</feature>
<feature type="helix" evidence="87">
    <location>
        <begin position="1242"/>
        <end position="1244"/>
    </location>
</feature>
<feature type="helix" evidence="82">
    <location>
        <begin position="2749"/>
        <end position="2751"/>
    </location>
</feature>
<feature type="helix" evidence="82">
    <location>
        <begin position="2752"/>
        <end position="2772"/>
    </location>
</feature>
<feature type="turn" evidence="82">
    <location>
        <begin position="2783"/>
        <end position="2786"/>
    </location>
</feature>
<feature type="helix" evidence="82">
    <location>
        <begin position="2794"/>
        <end position="2796"/>
    </location>
</feature>
<feature type="helix" evidence="82">
    <location>
        <begin position="2799"/>
        <end position="2818"/>
    </location>
</feature>
<feature type="strand" evidence="82">
    <location>
        <begin position="2822"/>
        <end position="2825"/>
    </location>
</feature>
<feature type="helix" evidence="83">
    <location>
        <begin position="2862"/>
        <end position="2864"/>
    </location>
</feature>
<feature type="helix" evidence="82">
    <location>
        <begin position="2869"/>
        <end position="2897"/>
    </location>
</feature>
<feature type="helix" evidence="82">
    <location>
        <begin position="2908"/>
        <end position="2910"/>
    </location>
</feature>
<feature type="helix" evidence="82">
    <location>
        <begin position="2913"/>
        <end position="2932"/>
    </location>
</feature>
<feature type="strand" evidence="82">
    <location>
        <begin position="2935"/>
        <end position="2938"/>
    </location>
</feature>
<feature type="helix" evidence="78">
    <location>
        <begin position="3617"/>
        <end position="3638"/>
    </location>
</feature>
<feature type="helix" evidence="92">
    <location>
        <begin position="3951"/>
        <end position="3969"/>
    </location>
</feature>
<feature type="turn" evidence="92">
    <location>
        <begin position="3970"/>
        <end position="3972"/>
    </location>
</feature>
<feature type="helix" evidence="92">
    <location>
        <begin position="3974"/>
        <end position="3982"/>
    </location>
</feature>
<feature type="helix" evidence="92">
    <location>
        <begin position="3985"/>
        <end position="4005"/>
    </location>
</feature>
<feature type="helix" evidence="92">
    <location>
        <begin position="4007"/>
        <end position="4009"/>
    </location>
</feature>
<feature type="helix" evidence="92">
    <location>
        <begin position="4010"/>
        <end position="4030"/>
    </location>
</feature>
<feature type="turn" evidence="92">
    <location>
        <begin position="4031"/>
        <end position="4033"/>
    </location>
</feature>
<feature type="helix" evidence="92">
    <location>
        <begin position="4039"/>
        <end position="4050"/>
    </location>
</feature>
<feature type="helix" evidence="92">
    <location>
        <begin position="4052"/>
        <end position="4055"/>
    </location>
</feature>
<feature type="turn" evidence="93">
    <location>
        <begin position="4056"/>
        <end position="4058"/>
    </location>
</feature>
<feature type="strand" evidence="89">
    <location>
        <begin position="4178"/>
        <end position="4184"/>
    </location>
</feature>
<feature type="strand" evidence="89">
    <location>
        <begin position="4188"/>
        <end position="4196"/>
    </location>
</feature>
<feature type="helix" evidence="89">
    <location>
        <begin position="4199"/>
        <end position="4204"/>
    </location>
</feature>
<feature type="helix" evidence="89">
    <location>
        <begin position="4208"/>
        <end position="4224"/>
    </location>
</feature>
<feature type="turn" evidence="92">
    <location>
        <begin position="4227"/>
        <end position="4229"/>
    </location>
</feature>
<feature type="helix" evidence="89">
    <location>
        <begin position="4230"/>
        <end position="4251"/>
    </location>
</feature>
<feature type="helix" evidence="89">
    <location>
        <begin position="4324"/>
        <end position="4340"/>
    </location>
</feature>
<feature type="helix" evidence="89">
    <location>
        <begin position="4542"/>
        <end position="4557"/>
    </location>
</feature>
<feature type="helix" evidence="89">
    <location>
        <begin position="4560"/>
        <end position="4577"/>
    </location>
</feature>
<feature type="strand" evidence="89">
    <location>
        <begin position="4580"/>
        <end position="4585"/>
    </location>
</feature>
<feature type="strand" evidence="89">
    <location>
        <begin position="4628"/>
        <end position="4631"/>
    </location>
</feature>
<feature type="strand" evidence="92">
    <location>
        <begin position="4635"/>
        <end position="4637"/>
    </location>
</feature>
<feature type="helix" evidence="89">
    <location>
        <begin position="4639"/>
        <end position="4664"/>
    </location>
</feature>
<feature type="helix" evidence="89">
    <location>
        <begin position="4666"/>
        <end position="4683"/>
    </location>
</feature>
<feature type="strand" evidence="89">
    <location>
        <begin position="4686"/>
        <end position="4690"/>
    </location>
</feature>
<feature type="helix" evidence="89">
    <location>
        <begin position="4697"/>
        <end position="4701"/>
    </location>
</feature>
<feature type="turn" evidence="89">
    <location>
        <begin position="4702"/>
        <end position="4704"/>
    </location>
</feature>
<feature type="helix" evidence="89">
    <location>
        <begin position="4705"/>
        <end position="4707"/>
    </location>
</feature>
<feature type="turn" evidence="90">
    <location>
        <begin position="4709"/>
        <end position="4712"/>
    </location>
</feature>
<feature type="strand" evidence="89">
    <location>
        <begin position="4713"/>
        <end position="4716"/>
    </location>
</feature>
<feature type="helix" evidence="92">
    <location>
        <begin position="4720"/>
        <end position="4732"/>
    </location>
</feature>
<feature type="helix" evidence="92">
    <location>
        <begin position="4734"/>
        <end position="4741"/>
    </location>
</feature>
<feature type="helix" evidence="92">
    <location>
        <begin position="4745"/>
        <end position="4748"/>
    </location>
</feature>
<feature type="helix" evidence="89">
    <location>
        <begin position="4767"/>
        <end position="4770"/>
    </location>
</feature>
<feature type="helix" evidence="89">
    <location>
        <begin position="4773"/>
        <end position="4784"/>
    </location>
</feature>
<feature type="helix" evidence="89">
    <location>
        <begin position="4787"/>
        <end position="4804"/>
    </location>
</feature>
<feature type="helix" evidence="89">
    <location>
        <begin position="4806"/>
        <end position="4814"/>
    </location>
</feature>
<feature type="helix" evidence="89">
    <location>
        <begin position="4815"/>
        <end position="4819"/>
    </location>
</feature>
<feature type="helix" evidence="89">
    <location>
        <begin position="4821"/>
        <end position="4832"/>
    </location>
</feature>
<feature type="helix" evidence="89">
    <location>
        <begin position="4834"/>
        <end position="4858"/>
    </location>
</feature>
<feature type="helix" evidence="89">
    <location>
        <begin position="4860"/>
        <end position="4862"/>
    </location>
</feature>
<feature type="strand" evidence="89">
    <location>
        <begin position="4867"/>
        <end position="4871"/>
    </location>
</feature>
<feature type="strand" evidence="89">
    <location>
        <begin position="4874"/>
        <end position="4878"/>
    </location>
</feature>
<feature type="helix" evidence="89">
    <location>
        <begin position="4879"/>
        <end position="4893"/>
    </location>
</feature>
<feature type="turn" evidence="89">
    <location>
        <begin position="4897"/>
        <end position="4900"/>
    </location>
</feature>
<feature type="strand" evidence="93">
    <location>
        <begin position="4905"/>
        <end position="4907"/>
    </location>
</feature>
<feature type="helix" evidence="89">
    <location>
        <begin position="4910"/>
        <end position="4925"/>
    </location>
</feature>
<feature type="helix" evidence="89">
    <location>
        <begin position="4928"/>
        <end position="4956"/>
    </location>
</feature>
<feature type="strand" evidence="89">
    <location>
        <begin position="4959"/>
        <end position="4961"/>
    </location>
</feature>
<feature type="helix" evidence="89">
    <location>
        <begin position="4965"/>
        <end position="4969"/>
    </location>
</feature>
<feature type="helix" evidence="89">
    <location>
        <begin position="4974"/>
        <end position="4980"/>
    </location>
</feature>
<feature type="turn" evidence="91">
    <location>
        <begin position="4981"/>
        <end position="4983"/>
    </location>
</feature>
<feature type="helix" evidence="89">
    <location>
        <begin position="4985"/>
        <end position="4997"/>
    </location>
</feature>
<feature type="turn" evidence="89">
    <location>
        <begin position="5000"/>
        <end position="5002"/>
    </location>
</feature>
<feature type="helix" evidence="89">
    <location>
        <begin position="5005"/>
        <end position="5015"/>
    </location>
</feature>
<feature type="helix" evidence="89">
    <location>
        <begin position="5028"/>
        <end position="5031"/>
    </location>
</feature>
<feature type="turn" evidence="89">
    <location>
        <begin position="5032"/>
        <end position="5035"/>
    </location>
</feature>
<reference key="1">
    <citation type="journal article" date="1989" name="Nature">
        <title>Primary structure and expression from complementary DNA of skeletal muscle ryanodine receptor.</title>
        <authorList>
            <person name="Takeshima H."/>
            <person name="Nishimura S."/>
            <person name="Matsumoto T."/>
            <person name="Ishido H."/>
            <person name="Kangawa K."/>
            <person name="Minamino N."/>
            <person name="Matsuo H."/>
            <person name="Ueda M."/>
            <person name="Hanaoka M."/>
            <person name="Hirose T."/>
            <person name="Numa S."/>
        </authorList>
    </citation>
    <scope>NUCLEOTIDE SEQUENCE [MRNA]</scope>
    <scope>PARTIAL PROTEIN SEQUENCE</scope>
    <scope>DOMAIN</scope>
    <scope>TISSUE SPECIFICITY</scope>
    <scope>SUBCELLULAR LOCATION</scope>
    <source>
        <tissue>Skeletal muscle</tissue>
    </source>
</reference>
<reference key="2">
    <citation type="journal article" date="1990" name="J. Biol. Chem.">
        <title>Molecular cloning of cDNA encoding human and rabbit forms of the Ca2+ release channel (ryanodine receptor) of skeletal muscle sarcoplasmic reticulum.</title>
        <authorList>
            <person name="Zorzato F."/>
            <person name="Fujii J."/>
            <person name="Otsu K."/>
            <person name="Phillips M.S."/>
            <person name="Green N.M."/>
            <person name="Lai F.A."/>
            <person name="Meissner G."/>
            <person name="Maclennan D.H."/>
        </authorList>
    </citation>
    <scope>NUCLEOTIDE SEQUENCE [MRNA]</scope>
    <source>
        <tissue>Skeletal muscle</tissue>
    </source>
</reference>
<reference key="3">
    <citation type="journal article" date="1999" name="J. Biol. Chem.">
        <title>A role for cysteine 3635 of RYR1 in redox modulation and calmodulin binding.</title>
        <authorList>
            <person name="Porter Moore C."/>
            <person name="Zhang J.Z."/>
            <person name="Hamilton S.L."/>
        </authorList>
    </citation>
    <scope>PROTEIN SEQUENCE OF 3631-3650</scope>
    <scope>S-NITROSYLATION AT CYS-3635</scope>
    <scope>INTERACTION WITH CALM</scope>
</reference>
<reference key="4">
    <citation type="journal article" date="1986" name="J. Biol. Chem.">
        <title>Calcium-ryanodine receptor complex. Solubilization and partial characterization from skeletal muscle junctional sarcoplasmic reticulum vesicles.</title>
        <authorList>
            <person name="Pessah I.N."/>
            <person name="Francini A.O."/>
            <person name="Scales D.J."/>
            <person name="Waterhouse A.L."/>
            <person name="Casida J.E."/>
        </authorList>
    </citation>
    <scope>FUNCTION</scope>
    <scope>SUBCELLULAR LOCATION</scope>
    <scope>TISSUE SPECIFICITY</scope>
</reference>
<reference key="5">
    <citation type="journal article" date="1993" name="Biochim. Biophys. Acta">
        <title>Phosphorylation of serine 2843 in ryanodine receptor-calcium release channel of skeletal muscle by cAMP-, cGMP- and CaM-dependent protein kinase.</title>
        <authorList>
            <person name="Suko J."/>
            <person name="Maurer-Fogy I."/>
            <person name="Plank B."/>
            <person name="Bertel O."/>
            <person name="Wyskovsky W."/>
            <person name="Hohenegger M."/>
            <person name="Hellmann G."/>
        </authorList>
    </citation>
    <scope>PHOSPHORYLATION AT SER-2843</scope>
</reference>
<reference key="6">
    <citation type="journal article" date="1995" name="Biochem. Biophys. Res. Commun.">
        <title>Affinity purification of the ryanodine receptor/calcium release channel from fast twitch skeletal muscle based on its tight association with FKBP12.</title>
        <authorList>
            <person name="Xin H.B."/>
            <person name="Timerman A.P."/>
            <person name="Onoue H."/>
            <person name="Wiederrecht G.J."/>
            <person name="Fleischer S."/>
        </authorList>
    </citation>
    <scope>INTERACTION WITH FKBP1A</scope>
    <scope>TISSUE SPECIFICITY</scope>
</reference>
<reference key="7">
    <citation type="journal article" date="1998" name="Ann. N. Y. Acad. Sci.">
        <title>FKBP12 modulates gating of the ryanodine receptor/calcium release channel.</title>
        <authorList>
            <person name="Ondrias K."/>
            <person name="Marx S.O."/>
            <person name="Gaburjakova M."/>
            <person name="Marks A.R."/>
        </authorList>
    </citation>
    <scope>INTERACTION WITH FKBP1A</scope>
</reference>
<reference key="8">
    <citation type="journal article" date="1998" name="Biochemistry">
        <title>Dual regulation of the skeletal muscle ryanodine receptor by triadin and calsequestrin.</title>
        <authorList>
            <person name="Ohkura M."/>
            <person name="Furukawa K."/>
            <person name="Fujimori H."/>
            <person name="Kuruma A."/>
            <person name="Kawano S."/>
            <person name="Hiraoka M."/>
            <person name="Kuniyasu A."/>
            <person name="Nakayama H."/>
            <person name="Ohizumi Y."/>
        </authorList>
    </citation>
    <scope>INTERACTION WITH TRDN</scope>
</reference>
<reference key="9">
    <citation type="journal article" date="1999" name="Biophys. J.">
        <title>Activation and inhibition of skeletal RyR channels by a part of the skeletal DHPR II-III loop: effects of DHPR Ser687 and FKBP12.</title>
        <authorList>
            <person name="Dulhunty A.F."/>
            <person name="Laver D.R."/>
            <person name="Gallant E.M."/>
            <person name="Casarotto M.G."/>
            <person name="Pace S.M."/>
            <person name="Curtis S."/>
        </authorList>
    </citation>
    <scope>INTERACTION WITH CACNA1S</scope>
    <scope>FUNCTION</scope>
</reference>
<reference key="10">
    <citation type="journal article" date="1999" name="Proc. Natl. Acad. Sci. U.S.A.">
        <title>A mutation in the transmembrane/luminal domain of the ryanodine receptor is associated with abnormal Ca(2+) release channel function and severe central core disease.</title>
        <authorList>
            <person name="Lynch P.J."/>
            <person name="Tong J."/>
            <person name="Lehane M."/>
            <person name="Mallet A."/>
            <person name="Giblin L."/>
            <person name="Heffron J.J.A."/>
            <person name="Vaughan P."/>
            <person name="Zafra G."/>
            <person name="MacLennan D.H."/>
            <person name="McCarthy T.V."/>
        </authorList>
    </citation>
    <scope>FUNCTION</scope>
    <scope>ACTIVITY REGULATION</scope>
    <scope>SUBCELLULAR LOCATION</scope>
    <scope>MUTAGENESIS OF ILE-4897</scope>
    <scope>SUBUNIT</scope>
</reference>
<reference key="11">
    <citation type="journal article" date="2001" name="Proc. Natl. Acad. Sci. U.S.A.">
        <title>Cysteine-3635 is responsible for skeletal muscle ryanodine receptor modulation by NO.</title>
        <authorList>
            <person name="Sun J."/>
            <person name="Xin C."/>
            <person name="Eu J.P."/>
            <person name="Stamler J.S."/>
            <person name="Meissner G."/>
        </authorList>
    </citation>
    <scope>S-NITROSYLATION AT CYS-3635</scope>
    <scope>MUTAGENESIS OF CYS-3635</scope>
    <scope>INTERACTION WITH CALM</scope>
</reference>
<reference key="12">
    <citation type="journal article" date="2002" name="J. Biol. Chem.">
        <title>Isoform-dependent formation of heteromeric Ca2+ release channels (ryanodine receptors).</title>
        <authorList>
            <person name="Xiao B."/>
            <person name="Masumiya H."/>
            <person name="Jiang D."/>
            <person name="Wang R."/>
            <person name="Sei Y."/>
            <person name="Zhang L."/>
            <person name="Murayama T."/>
            <person name="Ogawa Y."/>
            <person name="Lai F.A."/>
            <person name="Wagenknecht T."/>
            <person name="Chen S.R."/>
        </authorList>
    </citation>
    <scope>INTERACTION WITH RYR2</scope>
</reference>
<reference key="13">
    <citation type="journal article" date="2002" name="Proc. Natl. Acad. Sci. U.S.A.">
        <title>Topology of the Ca2+ release channel of skeletal muscle sarcoplasmic reticulum (RyR1).</title>
        <authorList>
            <person name="Du G.G."/>
            <person name="Sandhu B."/>
            <person name="Khanna V.K."/>
            <person name="Guo X.H."/>
            <person name="MacLennan D.H."/>
        </authorList>
    </citation>
    <scope>SUBCELLULAR LOCATION</scope>
    <scope>TOPOLOGY</scope>
</reference>
<reference key="14">
    <citation type="journal article" date="2003" name="J. Biol. Chem.">
        <title>Functional defects in six ryanodine receptor isoform-1 (RyR1) mutations associated with malignant hyperthermia and their impact on skeletal excitation-contraction coupling.</title>
        <authorList>
            <person name="Yang T."/>
            <person name="Ta T.A."/>
            <person name="Pessah I.N."/>
            <person name="Allen P.D."/>
        </authorList>
    </citation>
    <scope>FUNCTION</scope>
    <scope>TRANSPORTER ACTIVITY</scope>
    <scope>SUBCELLULAR LOCATION</scope>
    <scope>ACTIVITY REGULATION</scope>
    <scope>MUTAGENESIS OF ARG-164; GLY-342; ARG-615; ARG-2163; VAL-2168; ARG-2458 AND THR-4825</scope>
</reference>
<reference key="15">
    <citation type="journal article" date="2008" name="Proc. Natl. Acad. Sci. U.S.A.">
        <title>Selenoprotein N is required for ryanodine receptor calcium release channel activity in human and zebrafish muscle.</title>
        <authorList>
            <person name="Jurynec M.J."/>
            <person name="Xia R."/>
            <person name="Mackrill J.J."/>
            <person name="Gunther D."/>
            <person name="Crawford T."/>
            <person name="Flanigan K.M."/>
            <person name="Abramson J.J."/>
            <person name="Howard M.T."/>
            <person name="Grunwald D.J."/>
        </authorList>
    </citation>
    <scope>INTERACTION WITH SELENON</scope>
</reference>
<reference key="16">
    <citation type="journal article" date="2009" name="Int. J. Biochem. Cell Biol.">
        <title>Junctin and triadin each activate skeletal ryanodine receptors but junctin alone mediates functional interactions with calsequestrin.</title>
        <authorList>
            <person name="Wei L."/>
            <person name="Gallant E.M."/>
            <person name="Dulhunty A.F."/>
            <person name="Beard N.A."/>
        </authorList>
    </citation>
    <scope>INTERACTION WITH TRDN AND ASPH</scope>
</reference>
<reference key="17">
    <citation type="journal article" date="2011" name="Biophys. J.">
        <title>The beta(1a) subunit of the skeletal DHPR binds to skeletal RyR1 and activates the channel via its 35-residue C-terminal tail.</title>
        <authorList>
            <person name="Rebbeck R.T."/>
            <person name="Karunasekara Y."/>
            <person name="Gallant E.M."/>
            <person name="Board P.G."/>
            <person name="Beard N.A."/>
            <person name="Casarotto M.G."/>
            <person name="Dulhunty A.F."/>
        </authorList>
    </citation>
    <scope>INTERACTION WITH CACNB1</scope>
</reference>
<reference key="18">
    <citation type="journal article" date="2012" name="EMBO J.">
        <title>Nitric oxide-induced calcium release via ryanodine receptors regulates neuronal function.</title>
        <authorList>
            <person name="Kakizawa S."/>
            <person name="Yamazawa T."/>
            <person name="Chen Y."/>
            <person name="Ito A."/>
            <person name="Murayama T."/>
            <person name="Oyamada H."/>
            <person name="Kurebayashi N."/>
            <person name="Sato O."/>
            <person name="Watanabe M."/>
            <person name="Mori N."/>
            <person name="Oguchi K."/>
            <person name="Sakurai T."/>
            <person name="Takeshima H."/>
            <person name="Saito N."/>
            <person name="Iino M."/>
        </authorList>
    </citation>
    <scope>FUNCTION</scope>
    <scope>TRANSPORTER ACTIVITY</scope>
    <scope>ACTIVITY REGULATION</scope>
    <scope>S-NITROSYLATION AT CYS-3635</scope>
    <scope>MUTAGENESIS OF CYS-3635</scope>
</reference>
<reference key="19">
    <citation type="journal article" date="2016" name="J. Gen. Physiol.">
        <title>Structure-function relationships of peptides forming the calcin family of ryanodine receptor ligands.</title>
        <authorList>
            <person name="Xiao L."/>
            <person name="Gurrola G.B."/>
            <person name="Zhang J."/>
            <person name="Valdivia C.R."/>
            <person name="SanMartin M."/>
            <person name="Zamudio F.Z."/>
            <person name="Zhang L."/>
            <person name="Possani L.D."/>
            <person name="Valdivia H.H."/>
        </authorList>
    </citation>
    <scope>INTERACTION WITH SCORPION CALCIN</scope>
</reference>
<reference key="20">
    <citation type="journal article" date="2005" name="Nat. Struct. Mol. Biol.">
        <title>Internal structure and visualization of transmembrane domains of the RyR1 calcium release channel by cryo-EM.</title>
        <authorList>
            <person name="Samso M."/>
            <person name="Wagenknecht T."/>
            <person name="Allen P.D."/>
        </authorList>
    </citation>
    <scope>STRUCTURE BY ELECTRON MICROSCOPY (10 ANGSTROMS)</scope>
    <scope>SUBUNIT</scope>
    <scope>TISSUE SPECIFICITY</scope>
    <scope>SUBCELLULAR LOCATION</scope>
</reference>
<reference key="21">
    <citation type="journal article" date="2006" name="Structure">
        <title>Complex of calmodulin with a ryanodine receptor target reveals a novel, flexible binding mode.</title>
        <authorList>
            <person name="Maximciuc A.A."/>
            <person name="Putkey J.A."/>
            <person name="Shamoo Y."/>
            <person name="Mackenzie K.R."/>
        </authorList>
    </citation>
    <scope>X-RAY CRYSTALLOGRAPHY (2.0 ANGSTROMS) OF 3614-3643 IN COMPLEX WITH CALM</scope>
</reference>
<reference key="22">
    <citation type="journal article" date="2008" name="Proc. Natl. Acad. Sci. U.S.A.">
        <title>Subnanometer-resolution electron cryomicroscopy-based domain models for the cytoplasmic region of skeletal muscle RyR channel.</title>
        <authorList>
            <person name="Serysheva I.I."/>
            <person name="Ludtke S.J."/>
            <person name="Baker M.L."/>
            <person name="Cong Y."/>
            <person name="Topf M."/>
            <person name="Eramian D."/>
            <person name="Sali A."/>
            <person name="Hamilton S.L."/>
            <person name="Chiu W."/>
        </authorList>
    </citation>
    <scope>STRUCTURE BY ELECTRON MICROSCOPY (9.6 ANGSTROMS)</scope>
    <scope>SUBUNIT</scope>
</reference>
<reference key="23">
    <citation type="journal article" date="2009" name="Proc. Natl. Acad. Sci. U.S.A.">
        <title>Crystal structure of type I ryanodine receptor amino-terminal beta-trefoil domain reveals a disease-associated mutation 'hot spot' loop.</title>
        <authorList>
            <person name="Amador F.J."/>
            <person name="Liu S."/>
            <person name="Ishiyama N."/>
            <person name="Plevin M.J."/>
            <person name="Wilson A."/>
            <person name="MacLennan D.H."/>
            <person name="Ikura M."/>
        </authorList>
    </citation>
    <scope>X-RAY CRYSTALLOGRAPHY (2.5 ANGSTROMS) OF 1-210</scope>
</reference>
<reference key="24">
    <citation type="journal article" date="2009" name="Structure">
        <title>Crystal structures of the N-terminal domains of cardiac and skeletal muscle ryanodine receptors: insights into disease mutations.</title>
        <authorList>
            <person name="Lobo P.A."/>
            <person name="Van Petegem F."/>
        </authorList>
    </citation>
    <scope>X-RAY CRYSTALLOGRAPHY (2.9 ANGSTROMS) OF 9-205</scope>
</reference>
<reference key="25">
    <citation type="journal article" date="2010" name="Nature">
        <title>The amino-terminal disease hotspot of ryanodine receptors forms a cytoplasmic vestibule.</title>
        <authorList>
            <person name="Tung C.C."/>
            <person name="Lobo P.A."/>
            <person name="Kimlicka L."/>
            <person name="Van Petegem F."/>
        </authorList>
    </citation>
    <scope>X-RAY CRYSTALLOGRAPHY (2.5 ANGSTROMS) OF 1-559</scope>
</reference>
<reference evidence="46" key="26">
    <citation type="journal article" date="2012" name="FEBS J.">
        <title>Structural determination of the phosphorylation domain of the ryanodine receptor.</title>
        <authorList>
            <person name="Sharma P."/>
            <person name="Ishiyama N."/>
            <person name="Nair U."/>
            <person name="Li W."/>
            <person name="Dong A."/>
            <person name="Miyake T."/>
            <person name="Wilson A."/>
            <person name="Ryan T."/>
            <person name="MacLennan D.H."/>
            <person name="Kislinger T."/>
            <person name="Ikura M."/>
            <person name="Dhe-Paganon S."/>
            <person name="Gramolini A.O."/>
        </authorList>
    </citation>
    <scope>X-RAY CRYSTALLOGRAPHY (2.16 ANGSTROMS) OF 2733-2940</scope>
</reference>
<reference evidence="47 48 49" key="27">
    <citation type="journal article" date="2012" name="Structure">
        <title>Disease mutations in the ryanodine receptor central region: crystal structures of a phosphorylation hot spot domain.</title>
        <authorList>
            <person name="Yuchi Z."/>
            <person name="Lau K."/>
            <person name="Van Petegem F."/>
        </authorList>
    </citation>
    <scope>X-RAY CRYSTALLOGRAPHY (1.59 ANGSTROMS) OF 2734-2940</scope>
    <scope>MUTAGENESIS OF LEU-2867</scope>
</reference>
<reference evidence="50 51 52 53 54 55 56 57 58" key="28">
    <citation type="journal article" date="2013" name="Nat. Commun.">
        <title>Disease mutations in the ryanodine receptor N-terminal region couple to a mobile intersubunit interface.</title>
        <authorList>
            <person name="Kimlicka L."/>
            <person name="Lau K."/>
            <person name="Tung C.C."/>
            <person name="Van Petegem F."/>
        </authorList>
    </citation>
    <scope>X-RAY CRYSTALLOGRAPHY (2.40 ANGSTROMS) OF 1-536</scope>
</reference>
<reference evidence="59" key="29">
    <citation type="journal article" date="2014" name="Nat. Commun.">
        <title>Crystal structures of wild type and disease mutant forms of the ryanodine receptor SPRY2 domain.</title>
        <authorList>
            <person name="Lau K."/>
            <person name="Van Petegem F."/>
        </authorList>
    </citation>
    <scope>X-RAY CRYSTALLOGRAPHY (1.84 ANGSTROMS) OF 1070-1246</scope>
    <scope>MUTAGENESIS OF ARG-1076</scope>
</reference>
<reference evidence="62" key="30">
    <citation type="journal article" date="2015" name="Nat. Commun.">
        <title>Crystal structures of ryanodine receptor SPRY1 and tandem-repeat domains reveal a critical FKBP12 binding determinant.</title>
        <authorList>
            <person name="Yuchi Z."/>
            <person name="Yuen S.M."/>
            <person name="Lau K."/>
            <person name="Underhill A.Q."/>
            <person name="Cornea R.L."/>
            <person name="Fessenden J.D."/>
            <person name="Van Petegem F."/>
        </authorList>
    </citation>
    <scope>X-RAY CRYSTALLOGRAPHY (1.55 ANGSTROMS) OF 857-1054</scope>
    <scope>INTERACTION WITH FKBP1A</scope>
    <scope>FUNCTION</scope>
    <scope>TRANSPORTER ACTIVITY</scope>
    <scope>ACTIVITY REGULATION</scope>
    <scope>MUTAGENESIS OF 674-PHE-LEU-675; ASN-760; ARG-1044; GLY-1050 AND VAL-2461</scope>
</reference>
<reference evidence="60 61" key="31">
    <citation type="journal article" date="2015" name="Nature">
        <title>Architecture and conformational switch mechanism of the ryanodine receptor.</title>
        <authorList>
            <person name="Efremov R.G."/>
            <person name="Leitner A."/>
            <person name="Aebersold R."/>
            <person name="Raunser S."/>
        </authorList>
    </citation>
    <scope>STRUCTURE BY ELECTRON MICROSCOPY (6.10 ANGSTROMS)</scope>
    <scope>SUBCELLULAR LOCATION</scope>
    <scope>TOPOLOGY</scope>
    <scope>TISSUE SPECIFICITY</scope>
</reference>
<reference evidence="45" key="32">
    <citation type="journal article" date="2015" name="Nature">
        <title>Structure of the rabbit ryanodine receptor RyR1 at near-atomic resolution.</title>
        <authorList>
            <person name="Yan Z."/>
            <person name="Bai X.C."/>
            <person name="Yan C."/>
            <person name="Wu J."/>
            <person name="Li Z."/>
            <person name="Xie T."/>
            <person name="Peng W."/>
            <person name="Yin C.C."/>
            <person name="Li X."/>
            <person name="Scheres S.H."/>
            <person name="Shi Y."/>
            <person name="Yan N."/>
        </authorList>
    </citation>
    <scope>STRUCTURE BY ELECTRON MICROSCOPY (3.80 ANGSTROMS) IN COMPLEX WITH FKBP1A</scope>
    <scope>SUBUNIT</scope>
    <scope>SUBCELLULAR LOCATION</scope>
    <scope>TOPOLOGY</scope>
    <scope>TISSUE SPECIFICITY</scope>
    <scope>DOMAIN</scope>
</reference>
<reference evidence="68 69 70 71 72 73 74" key="33">
    <citation type="journal article" date="2016" name="Cell">
        <title>Structural basis for gating and activation of RyR1.</title>
        <authorList>
            <person name="des Georges A."/>
            <person name="Clarke O.B."/>
            <person name="Zalk R."/>
            <person name="Yuan Q."/>
            <person name="Condon K.J."/>
            <person name="Grassucci R.A."/>
            <person name="Hendrickson W.A."/>
            <person name="Marks A.R."/>
            <person name="Frank J."/>
        </authorList>
    </citation>
    <scope>STRUCTURE BY ELECTRON MICROSCOPY (3.60 ANGSTROMS) OF 12-1275; 1573-2479; 2734-2939 AND 3639-5037 IN COMPLEXES WITH CALCIUM; ATP; RYANODINE AND CAFFEINE</scope>
    <scope>FUNCTION</scope>
    <scope>TRANSPORTER ACTIVITY</scope>
    <scope>ACTIVITY REGULATION</scope>
    <scope>SUBUNIT</scope>
    <scope>SUBCELLULAR LOCATION</scope>
    <scope>DOMAIN</scope>
    <scope>TOPOLOGY</scope>
</reference>
<reference evidence="67" key="34">
    <citation type="journal article" date="2016" name="Cell Res.">
        <title>Structural insights into Ca(2+)-activated long-range allosteric channel gating of RyR1.</title>
        <authorList>
            <person name="Wei R."/>
            <person name="Wang X."/>
            <person name="Zhang Y."/>
            <person name="Mukherjee S."/>
            <person name="Zhang L."/>
            <person name="Chen Q."/>
            <person name="Huang X."/>
            <person name="Jing S."/>
            <person name="Liu C."/>
            <person name="Li S."/>
            <person name="Wang G."/>
            <person name="Xu Y."/>
            <person name="Zhu S."/>
            <person name="Williams A.J."/>
            <person name="Sun F."/>
            <person name="Yin C.C."/>
        </authorList>
    </citation>
    <scope>STRUCTURE BY ELECTRON MICROSCOPY (4.90 ANGSTROMS)</scope>
    <scope>SUBUNIT</scope>
    <scope>SUBCELLULAR LOCATION</scope>
    <scope>TOPOLOGY</scope>
    <scope>TISSUE SPECIFICITY</scope>
</reference>
<reference evidence="63 64 65 66" key="35">
    <citation type="journal article" date="2016" name="Cell Res.">
        <title>The central domain of RyR1 is the transducer for long-range allosteric gating of channel opening.</title>
        <authorList>
            <person name="Bai X.C."/>
            <person name="Yan Z."/>
            <person name="Wu J."/>
            <person name="Li Z."/>
            <person name="Yan N."/>
        </authorList>
    </citation>
    <scope>STRUCTURE BY ELECTRON MICROSCOPY (3.80 ANGSTROMS) IN COMPLEX WITH FKBP1A</scope>
    <scope>SUBUNIT</scope>
    <scope>SUBCELLULAR LOCATION</scope>
    <scope>TOPOLOGY</scope>
    <scope>TISSUE SPECIFICITY</scope>
    <scope>DOMAIN</scope>
</reference>
<proteinExistence type="evidence at protein level"/>
<sequence>MGDGGEGEDEVQFLRTDDEVVLQCSATVLKEQLKLCLAAEGFGNRLCFLEPTSNAQNVPPDLAICCFTLEQSLSVRALQEMLANTVEAGVESSQGGGHRTLLYGHAILLRHAHSRMYLSCLTTSRSMTDKLAFDVGLQEDATGEACWWTMHPASKQRSEGEKVRVGDDLILVSVSSERYLHLSTASGELQVDASFMQTLWNMNPICSCCEEGYVTGGHVLRLFHGHMDECLTISAADSDDQRRLVYYEGGAVCTHARSLWRLEPLRISWSGSHLRWGQPLRIRHVTTGRYLALTEDQGLVVVDACKAHTKATSFCFRVSKEKLDTAPKRDVEGMGPPEIKYGESLCFVQHVASGLWLTYAAPDPKALRLGVLKKKAILHQEGHMDDALFLTRCQQEESQAARMIHSTAGLYNQFIKGLDSFSGKPRGSGPPAGPALPIEAVILSLQDLIGYFEPPSEELQHEEKQSKLRSLRNRQSLFQEEGMLSLVLNCIDRLNVYTTAAHFAEYAGEEAAESWKEIVNLLYELLASLIRGNRANCALFSTNLDWVVSKLDRLEASSGILEVLYCVLIESPEVLNIIQENHIKSIISLLDKHGRNHKVLDVLCSLCVCNGVAVRSNQDLITENLLPGRELLLQTNLINYVTSIRPNIFVGRAEGSTQYGKWYFEVMVDEVVPFLTAQATHLRVGWALTEGYSPYPGGGEGWGGNGVGDDLYSYGFDGLHLWTGHVARPVTSPGQHLLAPEDVVSCCLDLSVPSISFRINGCPVQGVFEAFNLDGLFFPVVSFSAGVKVRFLLGGRHGEFKFLPPPGYAPCHEAVLPRERLRLEPIKEYRREGPRGPHLVGPSRCLSHTDFVPCPVDTVQIVLPPHLERIREKLAENIHELWALTRIEQGWTYGPVRDDNKRLHPCLVNFHSLPEPERNYNLQMSGETLKTLLALGCHVGMADEKAEDNLKKTKLPKTYMMSNGYKPAPLDLSHVRLTPAQTTLVDRLAENGHNVWARDRVAQGWSYSAVQDIPARRNPRLVPYRLLDEATKRSNRDSLCQAVRTLLGYGYNIEPPDQEPSQVENQSRWDRVRIFRAEKSYTVQSGRWYFEFEAVTTGEMRVGWARPELRPDVELGADELAYVFNGHRGQRWHLGSEPFGRPWQSGDVVGCMIDLTENTIIFTLNGEVLMSDSGSETAFREIEIGDGFLPVCSLGPGQVGHLNLGQDVSSLRFFAICGLQEGFEPFAINMQRPVTTWFSKSLPQFEPVPPEHPHYEVARMDGTVDTPPCLRLAHRTWGSQNSLVEMLFLRLSLPVQFHQHFRCTAGATPLAPPGLQPPAEDEARAAEPDPDYENLRRSAGGWGEAEGGKEGTAKEGTPGGTPQPGVEAQPVRAENEKDATTEKNKKRGFLFKAKKAAMMTQPPATPALPRLPHDVVPADNRDDPEIILNTTTYYYSVRVFAGQEPSCVWVGWVTPDYHQHDMNFDLSKVRAVTVTMGDEQGNVHSSLKCSNCYMVWGGDFVSPGQQGRISHTDLVIGCLVDLATGLMTFTANGKESNTFFQVEPNTKLFPAVFVLPTHQNVIQFELGKQKNIMPLSAAMFLSERKNPAPQCPPRLEVQMLMPVSWSRMPNHFLQVETRRAGERLGWAVQCQDPLTMMALHIPEENRCMDILELSERLDLQRFHSHTLRLYRAVCALGNNRVAHALCSHVDQAQLLHALEDAHLPGPLRAGYYDLLISIHLESACRSRRSMLSEYIVPLTPETRAITLFPPGRKGGNARRHGLPGVGVTTSLRPPHHFSPPCFVAALPAAGVAEAPARLSPAIPLEALRDKALRMLGEAVRDGGQHARDPVGGSVEFQFVPVLKLVSTLLVMGIFGDEDVKQILKMIEPEVFTEEEEEEEEEEEEEEEEEEDEEEKEEDEEEEEKEDAEKEEEEAPEGEKEDLEEGLLQMKLPESVKLQMCNLLEYFCDQELQHRVESLAAFAERYVDKLQANQRSRYALLMRAFTMSAAETARRTREFRSPPQEQINMLLHFKDEADEEDCPLPEDIRQDLQDFHQDLLAHCGIQLEGEEEEPEEETSLSSRLRSLLETVRLVKKKEEKPEEELPAEEKKPQSLQELVSHMVVRWAQEDYVQSPELVRAMFSLLHRQYDGLGELLRALPRAYTISPSSVEDTMSLLECLGQIRSLLIVQMGPQEENLMIQSIGNIMNNKVFYQHPNLMRALGMHETVMEVMVNVLGGGETKEIRFPKMVTSCCRFLCYFCRISRQNQRSMFDHLSYLLENSGIGLGMQGSTPLDVAAASVIDNNELALALQEQDLEKVVSYLAGCGLQSCPMLLAKGYPDIGWNPCGGERYLDFLRFAVFVNGESVEENANVVVRLLIRKPECFGPALRGEGGSGLLAAIEEAIRISEDPARDGPGVRRDRRREHFGEEPPEENRVHLGHAIMSFYAALIDLLGRCAPEMHLIQAGKGEALRIRAILRSLVPLDDLVGIISLPLQIPTLGKDGALVQPKMSASFVPDHKASMVLFLDRVYGIENQDFLLHVLDVGFLPDMRAAASLDTATFSTTEMALALNRYLCLAVLPLITKCAPLFAGTEHRAIMVDSMLHTVYRLSRGRSLTKAQRDVIEDCLMALCRYIRPSMLQHLLRRLVFDVPILNEFAKMPLKLLTNHYERCWKYYCLPTGWANFGVTSEEELHLTRKLFWGIFDSLAHKKYDQELYRMAMPCLCAIAGALPPDYVDASYSSKAEKKATVDAEGNFDPRPVETLNVIIPEKLDSFINKFAEYTHEKWAFDKIQNNWSYGENVDEELKTHPMLRPYKTFSEKDKEIYRWPIKESLKAMIAWEWTIEKAREGEEERTEKKKTRKISQTAQTYDPREGYNPQPPDLSGVTLSRELQAMAEQLAENYHNTWGRKKKQELEAKGGGTHPLLVPYDTLTAKEKARDREKAQELLKFLQMNGYAVTRGLKDMELDTSSIEKRFAFGFLQQLLRWMDISQEFIAHLEAVVSSGRVEKSPHEQEIKFFAKILLPLINQYFTNHCLYFLSTPAKVLGSGGHASNKEKEMITSLFCKLAALVRHRVSLFGTDAPAVVNCLHILARSLDARTVMKSGPEIVKAGLRSFFESASEDIEKMVENLRLGKVSQARTQVKGVGQNLTYTTVALLPVLTTLFQHIAQHQFGDDVILDDVQVSCYRTLCSIYSLGTTKNTYVEKLRPALGECLARLAAAMPVAFLEPQLNEYNACSVYTTKSPRERAILGLPNSVEEMCPDIPVLDRLMADIGGLAESGARYTEMPHVIEITLPMLCSYLPRWWERGPEAPPPALPAGAPPPCTAVTSDHLNSLLGNILRIIVNNLGIDEATWMKRLAVFAQPIVSRARPELLHSHFIPTIGRLRKRAGKVVAEEEQLRLEAKAEAEEGELLVRDEFSVLCRDLYALYPLLIRYVDNNRAHWLTEPNANAEELFRMVGEIFIYWSKSHNFKREEQNFVVQNEINNMSFLTADSKSKMAKAGDAQSGGSDQERTKKKRRGDRYSVQTSLIVATLKKMLPIGLNMCAPTDQDLIMLAKTRYALKDTDEEVREFLQNNLHLQGKVEGSPSLRWQMALYRGLPGREEDADDPEKIVRRVQEVSAVLYHLEQTEHPYKSKKAVWHKLLSKQRRRAVVACFRMTPLYNLPTHRACNMFLESYKAAWILTEDHSFEDRMIDDLSKAGEQEEEEEEVEEKKPDPLHQLVLHFSRTALTEKSKLDEDYLYMAYADIMAKSCHLEEGGENGEAEEEEVEVSFEEKEMEKQRLLYQQSRLHTRGAAEMVLQMISACKGETGAMVSSTLKLGISILNGGNAEVQQKMLDYLKDKKEVGFFQSIQALMQTCSVLDLNAFERQNKAEGLGMVNEDGTVINRQNGEKVMADDEFTQDLFRFLQLLCEGHNNDFQNYLRTQTGNTTTINIIICTVDYLLRLQESISDFYWYYSGKDVIEEQGKRNFSKAMSVAKQVFNSLTEYIQGPCTGNQQSLAHSRLWDAVVGFLHVFAHMMMKLAQDSSQIELLKELLDLQKDMVVMLLSLLEGNVVNGMIARQMVDMLVESSSNVEMILKFFDMFLKLKDIVGSEAFQDYVTDPRGLISKKDFQKAMDSQKQFTGPEIQFLLSCSEADENEMINFEEFANRFQEPARDIGFNVAVLLTNLSEHVPHDPRLRNFLELAESILEYFRPYLGRIEIMGASRRIERIYFEISETNRAQWEMPQVKESKRQFIFDVVNEGGEAEKMELFVSFCEDTIFEMQIAAQISEPEGEPEADEDEGMGEAAAEGAEEGAAGAEGAAGTVAAGATARLAAAAARALRGLSYRSLRRRVRRLRRLTAREAATALAALLWAVVARAGAAGAGAAAGALRLLWGSLFGGGLVEGAKKVTVTELLAGMPDPTSDEVHGEQPAGPGGDADGAGEGEGEGDAAEGDGDEEVAGHEAGPGGAEGVVAVADGGPFRPEGAGGLGDMGDTTPAEPPTPEGSPILKRKLGVDGEEEELVPEPEPEPEPEPEKADEENGEKEEVPEAPPEPPKKAPPSPPAKKEEAGGAGMEFWGELEVQRVKFLNYLSRNFYTLRFLALFLAFAINFILLFYKVSDSPPGEDDMEGSAAGDLAGAGSGGGSGWGSGAGEEAEGDEDENMVYYFLEESTGYMEPALWCLSLLHTLVAFLCIIGYNCLKVPLVIFKREKELARKLEFDGLYITEQPGDDDVKGQWDRLVLNTPSFPSNYWDKFVKRKVLDKHGDIFGRERIAELLGMDLASLEITAHNERKPDPPPGLLTWLMSIDVKYQIWKFGVIFTDNSFLYLGWYMVMSLLGHYNNFFFAAHLLDIAMGVKTLRTILSSVTHNGKQLVMTVGLLAVVVYLYTVVAFNFFRKFYNKSEDEDEPDMKCDDMMTCYLFHMYVGVRAGGGIGDEIEDPAGDEYELYRVVFDITFFFFVIVILLAIIQGLIIDAFGELRDQQEQVKEDMETKCFICGIGSDYFDTTPHGFETHTLEEHNLANYMFFLMYLINKDETEHTGQESYVWKMYQERCWDFFPAGDCFRKQYEDQLS</sequence>
<organism>
    <name type="scientific">Oryctolagus cuniculus</name>
    <name type="common">Rabbit</name>
    <dbReference type="NCBI Taxonomy" id="9986"/>
    <lineage>
        <taxon>Eukaryota</taxon>
        <taxon>Metazoa</taxon>
        <taxon>Chordata</taxon>
        <taxon>Craniata</taxon>
        <taxon>Vertebrata</taxon>
        <taxon>Euteleostomi</taxon>
        <taxon>Mammalia</taxon>
        <taxon>Eutheria</taxon>
        <taxon>Euarchontoglires</taxon>
        <taxon>Glires</taxon>
        <taxon>Lagomorpha</taxon>
        <taxon>Leporidae</taxon>
        <taxon>Oryctolagus</taxon>
    </lineage>
</organism>
<comment type="function">
    <text evidence="1 9 15 22 31 38 41 44">Cytosolic calcium-activated calcium channel that mediates the release of Ca(2+) from the sarcoplasmic reticulum into the cytosol and thereby plays a key role in triggering muscle contraction following depolarization of T-tubules (PubMed:10097181, PubMed:10388749, PubMed:12732639, PubMed:22036948, PubMed:26245150, PubMed:27662087, PubMed:3722165). Repeated very high-level exercise increases the open probability of the channel and leads to Ca(2+) leaking into the cytoplasm (By similarity). Can also mediate the release of Ca(2+) from intracellular stores in neurons, and may thereby promote prolonged Ca(2+) signaling in the brain. Required for normal embryonic development of muscle fibers and skeletal muscle. Required for normal heart morphogenesis, skin development and ossification during embryogenesis (By similarity).</text>
</comment>
<comment type="catalytic activity">
    <reaction evidence="15 22 27 31">
        <text>Ca(2+)(in) = Ca(2+)(out)</text>
        <dbReference type="Rhea" id="RHEA:29671"/>
        <dbReference type="ChEBI" id="CHEBI:29108"/>
    </reaction>
</comment>
<comment type="activity regulation">
    <text evidence="15 22 27 31">The calcium release is activated by increased cytosolic calcium levels, by nitric oxyde (NO), caffeine and ATP (PubMed:12732639, PubMed:22036948, PubMed:26245150, PubMed:27662087). Channel activity is modulated by the alkaloid ryanodine that binds to the open Ca-release channel with high affinity (PubMed:27662087). At low concentrations, ryanodine maintains the channel in an open conformation (PubMed:27662087). High ryanodine concentrations inhibit channel activity (PubMed:27662087). Channel activity is regulated by calmodulin (CALM). Channel activity is inhibited by magnesium ions, possibly by competition for calcium binding sites (PubMed:12732639).</text>
</comment>
<comment type="subunit">
    <text evidence="1 3 8 9 10 11 12 13 16 17 18 19 20 21 25 26 27 29 30 31 33 35">Homotetramer (PubMed:10097181, PubMed:15908964, PubMed:17027503, PubMed:18621707, PubMed:25470059, PubMed:25517095, PubMed:27468892, PubMed:27573175, PubMed:27662087). Can also form heterotetramers with RYR2 (PubMed:12213830). Identified in a complex composed of RYR1, PDE4D, PKA, FKBP1A and protein phosphatase 1 (PP1). Repeated very high-level exercise decreases interaction with PDE4D and protein phosphatase 1 (PP1) (By similarity). Interacts with CALM; CALM with bound calcium inhibits the RYR1 channel activity (PubMed:10601232, PubMed:11562475, PubMed:17027503). Interacts with S100A1 (By similarity). Interacts with FKBP1A; this stabilizes the closed conformation of the channel (PubMed:10603943, PubMed:25517095, PubMed:26245150, PubMed:27468892, PubMed:7669046). Interacts with CACNA1S; interaction with CACNA1S is important for activation of the RYR1 channel (PubMed:10388749). Interacts with CACNB1 (PubMed:21320436). Interacts with TRDN and ASPH; these interactions stimulate RYR1 channel activity (PubMed:19398037, PubMed:9737879). Interacts with SELENON (PubMed:18713863). Interacts with scorpion calcins (AC P0DPT1; AC P0DM30; AC A0A1L4BJ42; AC P59868; AC P60254; AC B8QG00; AC L0GBR1; AC P60252; AC P60253) (PubMed:27114612).</text>
</comment>
<comment type="interaction">
    <interactant intactId="EBI-6477441">
        <id>P11716</id>
    </interactant>
    <interactant intactId="EBI-16134925">
        <id>P62943</id>
        <label>FKBP1A</label>
    </interactant>
    <organismsDiffer>false</organismsDiffer>
    <experiments>2</experiments>
</comment>
<comment type="interaction">
    <interactant intactId="EBI-6477441">
        <id>P11716</id>
    </interactant>
    <interactant intactId="EBI-6477441">
        <id>P11716</id>
        <label>RYR1</label>
    </interactant>
    <organismsDiffer>false</organismsDiffer>
    <experiments>7</experiments>
</comment>
<comment type="interaction">
    <interactant intactId="EBI-6477441">
        <id>P11716</id>
    </interactant>
    <interactant intactId="EBI-397029">
        <id>P28652</id>
        <label>Camk2b</label>
    </interactant>
    <organismsDiffer>true</organismsDiffer>
    <experiments>4</experiments>
</comment>
<comment type="interaction">
    <interactant intactId="EBI-6477441">
        <id>P11716</id>
    </interactant>
    <interactant intactId="EBI-1027571">
        <id>P62942</id>
        <label>FKBP1A</label>
    </interactant>
    <organismsDiffer>true</organismsDiffer>
    <experiments>2</experiments>
</comment>
<comment type="interaction">
    <interactant intactId="EBI-6477441">
        <id>P11716</id>
    </interactant>
    <interactant intactId="EBI-15766566">
        <id>P68106-1</id>
        <label>FKBP1B</label>
    </interactant>
    <organismsDiffer>true</organismsDiffer>
    <experiments>2</experiments>
</comment>
<comment type="interaction">
    <interactant intactId="EBI-6477441">
        <id>P11716</id>
    </interactant>
    <interactant intactId="EBI-6477285">
        <id>P02639</id>
        <label>S100A1</label>
    </interactant>
    <organismsDiffer>true</organismsDiffer>
    <experiments>3</experiments>
</comment>
<comment type="subcellular location">
    <subcellularLocation>
        <location evidence="14 15 19 26 28 29 30 31 32">Sarcoplasmic reticulum membrane</location>
        <topology evidence="25 26 29 30 31">Multi-pass membrane protein</topology>
    </subcellularLocation>
    <text evidence="14 25 29 30 31">The number of predicted transmembrane domains varies between orthologs, but the 3D-structures show the presence of six transmembrane regions. Both N-terminus and C-terminus are cytoplasmic.</text>
</comment>
<comment type="tissue specificity">
    <text evidence="16 25 26 28 29 30 32 33">Detected in skeletal muscle (at protein level) (PubMed:25470059, PubMed:25517095, PubMed:2725677, PubMed:27468892, PubMed:27573175, PubMed:3722165). Fast- or slow-twitch skeletal muscle.</text>
</comment>
<comment type="domain">
    <text evidence="26 28 29 30 31">The calcium release channel activity resides in the C-terminal region while the remaining part of the protein constitutes the 'foot' structure spanning the junctional gap between the sarcoplasmic reticulum (SR) and the T-tubule (PubMed:25517095, PubMed:2725677, PubMed:27468892, PubMed:27573175, PubMed:27662087). Pore opening is mediated via the cytoplasmic calcium-binding domains that mediate a small rotation of the channel-forming transmembrane regions that then leads to channel opening (PubMed:27468892).</text>
</comment>
<comment type="PTM">
    <text>The N-terminus is blocked.</text>
</comment>
<comment type="PTM">
    <text evidence="3">Channel activity is modulated by phosphorylation. Phosphorylation at Ser-2843 may increase channel activity. Repeated very high-level exercise increases phosphorylation at Ser-2843.</text>
</comment>
<comment type="PTM">
    <text evidence="3 22">Activated by reversible S-nitrosylation (PubMed:22036948). Repeated very high-level exercise increases S-nitrosylation (By similarity).</text>
</comment>
<comment type="miscellaneous">
    <text evidence="8">Coexpression of normal and mutant Thr-4897 RYR1 in a 1:1 ratio produces RYR1 channels with normal halothane and caffeine sensitivities, but maximal levels of Ca(2+) release are reduced by 67%. Binding of [3H]ryanodine indicates that the heterozygous channel is activated by Ca(2+) concentrations 4-fold lower than normal. Single-cell analysis of cotransfected cells shows a significantly increased resting cytoplasmic Ca(2+) level and a significantly reduced luminal Ca(2+) level. These data indicated a leaky channel, possibly caused by a reduction in the Ca(2+) concentration required for channel activation.</text>
</comment>
<comment type="similarity">
    <text evidence="37">Belongs to the ryanodine receptor (TC 1.A.3.1) family. RYR1 subfamily.</text>
</comment>
<gene>
    <name evidence="36" type="primary">RYR1</name>
</gene>
<protein>
    <recommendedName>
        <fullName evidence="39">Ryanodine receptor 1</fullName>
        <shortName>RYR-1</shortName>
        <shortName>RyR1</shortName>
    </recommendedName>
    <alternativeName>
        <fullName>Skeletal muscle calcium release channel</fullName>
    </alternativeName>
    <alternativeName>
        <fullName>Skeletal muscle ryanodine receptor</fullName>
    </alternativeName>
    <alternativeName>
        <fullName>Skeletal muscle-type ryanodine receptor</fullName>
    </alternativeName>
    <alternativeName>
        <fullName>Type 1 ryanodine receptor</fullName>
    </alternativeName>
</protein>
<name>RYR1_RABIT</name>
<accession>P11716</accession>
<dbReference type="EMBL" id="X15209">
    <property type="protein sequence ID" value="CAA33279.1"/>
    <property type="molecule type" value="mRNA"/>
</dbReference>
<dbReference type="EMBL" id="X15750">
    <property type="protein sequence ID" value="CAA33762.1"/>
    <property type="molecule type" value="mRNA"/>
</dbReference>
<dbReference type="PIR" id="S04654">
    <property type="entry name" value="B35041"/>
</dbReference>
<dbReference type="RefSeq" id="NP_001095188.1">
    <property type="nucleotide sequence ID" value="NM_001101718.1"/>
</dbReference>
<dbReference type="PDB" id="2BCX">
    <property type="method" value="X-ray"/>
    <property type="resolution" value="2.00 A"/>
    <property type="chains" value="B=3614-3643"/>
</dbReference>
<dbReference type="PDB" id="2XOA">
    <property type="method" value="X-ray"/>
    <property type="resolution" value="2.50 A"/>
    <property type="chains" value="A=1-559"/>
</dbReference>
<dbReference type="PDB" id="3HSM">
    <property type="method" value="X-ray"/>
    <property type="resolution" value="2.50 A"/>
    <property type="chains" value="A/B=1-210"/>
</dbReference>
<dbReference type="PDB" id="3ILA">
    <property type="method" value="X-ray"/>
    <property type="resolution" value="2.90 A"/>
    <property type="chains" value="A/B/C/D/E/F/G/H/I=9-205"/>
</dbReference>
<dbReference type="PDB" id="3J8H">
    <property type="method" value="EM"/>
    <property type="resolution" value="3.80 A"/>
    <property type="chains" value="A/C/E/G=1-5037"/>
</dbReference>
<dbReference type="PDB" id="3RQR">
    <property type="method" value="X-ray"/>
    <property type="resolution" value="2.16 A"/>
    <property type="chains" value="A=2733-2940"/>
</dbReference>
<dbReference type="PDB" id="4ERT">
    <property type="method" value="X-ray"/>
    <property type="resolution" value="1.95 A"/>
    <property type="chains" value="A=2734-2940"/>
</dbReference>
<dbReference type="PDB" id="4ESU">
    <property type="method" value="X-ray"/>
    <property type="resolution" value="1.59 A"/>
    <property type="chains" value="A=2734-2940"/>
</dbReference>
<dbReference type="PDB" id="4ETT">
    <property type="method" value="X-ray"/>
    <property type="resolution" value="2.20 A"/>
    <property type="chains" value="A=2734-2940"/>
</dbReference>
<dbReference type="PDB" id="4ETU">
    <property type="method" value="X-ray"/>
    <property type="resolution" value="2.19 A"/>
    <property type="chains" value="A=2734-2938"/>
</dbReference>
<dbReference type="PDB" id="4I0Y">
    <property type="method" value="X-ray"/>
    <property type="resolution" value="2.80 A"/>
    <property type="chains" value="A=1-536"/>
</dbReference>
<dbReference type="PDB" id="4I1E">
    <property type="method" value="X-ray"/>
    <property type="resolution" value="2.40 A"/>
    <property type="chains" value="A=1-536"/>
</dbReference>
<dbReference type="PDB" id="4I2S">
    <property type="method" value="X-ray"/>
    <property type="resolution" value="2.50 A"/>
    <property type="chains" value="A=1-536"/>
</dbReference>
<dbReference type="PDB" id="4I37">
    <property type="method" value="X-ray"/>
    <property type="resolution" value="2.95 A"/>
    <property type="chains" value="A=1-536"/>
</dbReference>
<dbReference type="PDB" id="4I3N">
    <property type="method" value="X-ray"/>
    <property type="resolution" value="2.95 A"/>
    <property type="chains" value="A=1-536"/>
</dbReference>
<dbReference type="PDB" id="4I6I">
    <property type="method" value="X-ray"/>
    <property type="resolution" value="2.50 A"/>
    <property type="chains" value="A=1-559"/>
</dbReference>
<dbReference type="PDB" id="4I7I">
    <property type="method" value="X-ray"/>
    <property type="resolution" value="2.90 A"/>
    <property type="chains" value="A=1-536"/>
</dbReference>
<dbReference type="PDB" id="4I8M">
    <property type="method" value="X-ray"/>
    <property type="resolution" value="2.80 A"/>
    <property type="chains" value="A=1-536"/>
</dbReference>
<dbReference type="PDB" id="4I96">
    <property type="method" value="X-ray"/>
    <property type="resolution" value="2.73 A"/>
    <property type="chains" value="A=217-536"/>
</dbReference>
<dbReference type="PDB" id="4P9J">
    <property type="method" value="X-ray"/>
    <property type="resolution" value="1.84 A"/>
    <property type="chains" value="A/B/C=1070-1246"/>
</dbReference>
<dbReference type="PDB" id="4UWA">
    <property type="method" value="EM"/>
    <property type="resolution" value="6.10 A"/>
    <property type="chains" value="A/B/C/D=1-5037"/>
</dbReference>
<dbReference type="PDB" id="4UWE">
    <property type="method" value="EM"/>
    <property type="resolution" value="8.50 A"/>
    <property type="chains" value="A/B/C/D=1-5037"/>
</dbReference>
<dbReference type="PDB" id="5C30">
    <property type="method" value="X-ray"/>
    <property type="resolution" value="1.55 A"/>
    <property type="chains" value="A=857-1054"/>
</dbReference>
<dbReference type="PDB" id="5GKY">
    <property type="method" value="EM"/>
    <property type="resolution" value="3.80 A"/>
    <property type="chains" value="A/C/E/G=1-5037"/>
</dbReference>
<dbReference type="PDB" id="5GKZ">
    <property type="method" value="EM"/>
    <property type="resolution" value="4.00 A"/>
    <property type="chains" value="A/C/E/G=1-5037"/>
</dbReference>
<dbReference type="PDB" id="5GL0">
    <property type="method" value="EM"/>
    <property type="resolution" value="4.20 A"/>
    <property type="chains" value="A/C/E/G=1-5037"/>
</dbReference>
<dbReference type="PDB" id="5GL1">
    <property type="method" value="EM"/>
    <property type="resolution" value="5.70 A"/>
    <property type="chains" value="A/C/E/G=1-5037"/>
</dbReference>
<dbReference type="PDB" id="5J8V">
    <property type="method" value="EM"/>
    <property type="resolution" value="4.90 A"/>
    <property type="chains" value="A/B/C/D=1-5037"/>
</dbReference>
<dbReference type="PDB" id="5T15">
    <property type="method" value="EM"/>
    <property type="resolution" value="3.80 A"/>
    <property type="chains" value="B/E/G/I=12-1275, B/E/G/I=1573-2479, B/E/G/I=2734-2939, B/E/G/I=3639-5037"/>
</dbReference>
<dbReference type="PDB" id="5T9M">
    <property type="method" value="EM"/>
    <property type="resolution" value="3.80 A"/>
    <property type="chains" value="B/E/G/I=12-1275, B/E/G/I=1573-2479, B/E/G/I=2734-2939, B/E/G/I=3639-5037"/>
</dbReference>
<dbReference type="PDB" id="5T9N">
    <property type="method" value="EM"/>
    <property type="resolution" value="3.80 A"/>
    <property type="chains" value="B/E/G/I=12-1275, B/E/G/I=1573-2479, B/E/G/I=2734-2939, B/E/G/I=3639-5037"/>
</dbReference>
<dbReference type="PDB" id="5T9R">
    <property type="method" value="EM"/>
    <property type="resolution" value="3.80 A"/>
    <property type="chains" value="B/E/G/I=12-1275, B/E/G/I=1573-2479, B/E/G/I=2734-2939, B/E/G/I=3639-5037"/>
</dbReference>
<dbReference type="PDB" id="5T9S">
    <property type="method" value="EM"/>
    <property type="resolution" value="3.80 A"/>
    <property type="chains" value="B/E/G/I=12-1275, B/E/G/I=1573-2479, B/E/G/I=2734-2939, B/E/G/I=3639-5037"/>
</dbReference>
<dbReference type="PDB" id="5T9V">
    <property type="method" value="EM"/>
    <property type="resolution" value="3.80 A"/>
    <property type="chains" value="B/E/G/I=12-1275, B/E/G/I=1573-2479, B/E/G/I=2734-2939, B/E/G/I=3639-4253, B/E/G/I=4540-5037"/>
</dbReference>
<dbReference type="PDB" id="5TA3">
    <property type="method" value="EM"/>
    <property type="resolution" value="3.80 A"/>
    <property type="chains" value="B/E/G/I=12-1275, B/E/G/I=1573-2479, B/E/G/I=2734-2939, B/E/G/I=3639-4253, B/E/G/I=4541-5037"/>
</dbReference>
<dbReference type="PDB" id="5TAL">
    <property type="method" value="EM"/>
    <property type="resolution" value="3.80 A"/>
    <property type="chains" value="B/E/G/I=12-1275, B/E/G/I=1573-2479, B/E/G/I=2734-2939, B/E/G/I=3639-4253, B/E/G/I=4541-5037"/>
</dbReference>
<dbReference type="PDB" id="5TAM">
    <property type="method" value="EM"/>
    <property type="resolution" value="3.80 A"/>
    <property type="chains" value="B/E/G/I=12-1275, B/E/G/I=1573-2479, B/E/G/I=2734-2939, B/E/G/I=3639-4253, B/E/G/I=4541-5037"/>
</dbReference>
<dbReference type="PDB" id="5TAN">
    <property type="method" value="EM"/>
    <property type="resolution" value="3.80 A"/>
    <property type="chains" value="B/E/G/I=12-1275, B/E/G/I=1573-2479, B/E/G/I=2734-2939, B/E/G/I=3639-4253, B/E/G/I=4541-5037"/>
</dbReference>
<dbReference type="PDB" id="5TAP">
    <property type="method" value="EM"/>
    <property type="resolution" value="3.80 A"/>
    <property type="chains" value="B/E/G/I=12-1275, B/E/G/I=1573-2479, B/E/G/I=2734-2939, B/E/G/I=3639-4253, B/E/G/I=4541-5037"/>
</dbReference>
<dbReference type="PDB" id="5TAQ">
    <property type="method" value="EM"/>
    <property type="resolution" value="3.80 A"/>
    <property type="chains" value="B/E/G/I=12-1275, B/E/G/I=1573-2479, B/E/G/I=2734-2939, B/E/G/I=3639-4253, B/E/G/I=4541-5037"/>
</dbReference>
<dbReference type="PDB" id="5TAS">
    <property type="method" value="EM"/>
    <property type="resolution" value="3.80 A"/>
    <property type="chains" value="B/E/G/I=12-1275, B/E/G/I=1573-2479, B/E/G/I=2734-2939, B/E/G/I=3639-4253, B/E/G/I=4541-5037"/>
</dbReference>
<dbReference type="PDB" id="5TAT">
    <property type="method" value="EM"/>
    <property type="resolution" value="3.80 A"/>
    <property type="chains" value="B/E/G/I=12-1275, B/E/G/I=1573-2479, B/E/G/I=2734-2939, B/E/G/I=3639-4253, B/E/G/I=4541-5037"/>
</dbReference>
<dbReference type="PDB" id="5TAU">
    <property type="method" value="EM"/>
    <property type="resolution" value="3.80 A"/>
    <property type="chains" value="B/E/G/I=12-1275, B/E/G/I=1573-2479, B/E/G/I=2734-2939, B/E/G/I=3639-4253, B/E/G/I=4541-5037"/>
</dbReference>
<dbReference type="PDB" id="5TAV">
    <property type="method" value="EM"/>
    <property type="resolution" value="3.80 A"/>
    <property type="chains" value="B/E/G/I=12-1275, B/E/G/I=1573-2479, B/E/G/I=2734-2939, B/E/G/I=3639-4253, B/E/G/I=4541-5037"/>
</dbReference>
<dbReference type="PDB" id="5TAW">
    <property type="method" value="EM"/>
    <property type="resolution" value="3.80 A"/>
    <property type="chains" value="B/E/G/I=12-1275, B/E/G/I=1573-2479, B/E/G/I=2734-2939, B/E/G/I=3639-4253, B/E/G/I=4541-5037"/>
</dbReference>
<dbReference type="PDB" id="5TAX">
    <property type="method" value="EM"/>
    <property type="resolution" value="3.80 A"/>
    <property type="chains" value="B/E/G/I=12-1275, B/E/G/I=1573-2479, B/E/G/I=2734-2939, B/E/G/I=3639-4253, B/E/G/I=4541-5037"/>
</dbReference>
<dbReference type="PDB" id="5TAY">
    <property type="method" value="EM"/>
    <property type="resolution" value="3.80 A"/>
    <property type="chains" value="B/E/G/I=12-1275, B/E/G/I=1573-2479, B/E/G/I=2734-2939, B/E/G/I=3639-4253, B/E/G/I=4541-5037"/>
</dbReference>
<dbReference type="PDB" id="5TAZ">
    <property type="method" value="EM"/>
    <property type="resolution" value="3.80 A"/>
    <property type="chains" value="B/E/G/I=12-1275, B/E/G/I=1573-2479, B/E/G/I=2734-2939, B/E/G/I=3639-4253, B/E/G/I=4541-5037"/>
</dbReference>
<dbReference type="PDB" id="5TB0">
    <property type="method" value="EM"/>
    <property type="resolution" value="3.80 A"/>
    <property type="chains" value="B/E/G/I=1-5037"/>
</dbReference>
<dbReference type="PDB" id="5TB1">
    <property type="method" value="EM"/>
    <property type="resolution" value="3.80 A"/>
    <property type="chains" value="B/E/G/I=12-1275, B/E/G/I=1573-2479, B/E/G/I=2734-2939, B/E/G/I=3639-4253, B/E/G/I=4541-5037"/>
</dbReference>
<dbReference type="PDB" id="5TB2">
    <property type="method" value="EM"/>
    <property type="resolution" value="3.80 A"/>
    <property type="chains" value="B/E/G/I=12-1275, B/E/G/I=1573-2479, B/E/G/I=2734-2939, B/E/G/I=3639-4253, B/E/G/I=4541-5037"/>
</dbReference>
<dbReference type="PDB" id="5TB3">
    <property type="method" value="EM"/>
    <property type="resolution" value="3.80 A"/>
    <property type="chains" value="B/E/G/I=12-1275, B/E/G/I=1573-2479, B/E/G/I=2734-2939, B/E/G/I=3639-4253, B/E/G/I=4541-5037"/>
</dbReference>
<dbReference type="PDB" id="5TB4">
    <property type="method" value="EM"/>
    <property type="resolution" value="3.80 A"/>
    <property type="chains" value="B/E/G/I=12-1275, B/E/G/I=1573-2479, B/E/G/I=2734-2939, B/E/G/I=3639-4253, B/E/G/I=4541-5037"/>
</dbReference>
<dbReference type="PDB" id="6FG3">
    <property type="method" value="EM"/>
    <property type="resolution" value="7.30 A"/>
    <property type="chains" value="A/B/C/D=1-5037"/>
</dbReference>
<dbReference type="PDB" id="6FOO">
    <property type="method" value="EM"/>
    <property type="resolution" value="8.20 A"/>
    <property type="chains" value="A/B/C/D=1-5037"/>
</dbReference>
<dbReference type="PDB" id="6M2W">
    <property type="method" value="EM"/>
    <property type="resolution" value="3.80 A"/>
    <property type="chains" value="A/D/G/J=1-5037"/>
</dbReference>
<dbReference type="PDB" id="6WOT">
    <property type="method" value="EM"/>
    <property type="resolution" value="3.54 A"/>
    <property type="chains" value="A/B/C/D=1-5037"/>
</dbReference>
<dbReference type="PDB" id="7CF9">
    <property type="method" value="EM"/>
    <property type="resolution" value="4.70 A"/>
    <property type="chains" value="A/C/E/G=1-5037"/>
</dbReference>
<dbReference type="PDB" id="7M6A">
    <property type="method" value="EM"/>
    <property type="resolution" value="3.36 A"/>
    <property type="chains" value="A/B/G/I=1-5037"/>
</dbReference>
<dbReference type="PDB" id="7M6L">
    <property type="method" value="EM"/>
    <property type="resolution" value="3.98 A"/>
    <property type="chains" value="A/B/G/I=1-5037"/>
</dbReference>
<dbReference type="PDB" id="7T64">
    <property type="method" value="EM"/>
    <property type="resolution" value="4.00 A"/>
    <property type="chains" value="A/B/C/D=1-5037"/>
</dbReference>
<dbReference type="PDB" id="7T65">
    <property type="method" value="EM"/>
    <property type="resolution" value="4.05 A"/>
    <property type="chains" value="A/B/C/D=1-5037"/>
</dbReference>
<dbReference type="PDB" id="7TDG">
    <property type="method" value="EM"/>
    <property type="resolution" value="3.80 A"/>
    <property type="chains" value="A/B/C/D=1-5037"/>
</dbReference>
<dbReference type="PDB" id="7TDH">
    <property type="method" value="EM"/>
    <property type="resolution" value="4.00 A"/>
    <property type="chains" value="A/B/C/D=1-5037"/>
</dbReference>
<dbReference type="PDB" id="7TDI">
    <property type="method" value="EM"/>
    <property type="resolution" value="3.30 A"/>
    <property type="chains" value="A/B/C/D=1-5037"/>
</dbReference>
<dbReference type="PDB" id="7TDJ">
    <property type="method" value="EM"/>
    <property type="resolution" value="3.70 A"/>
    <property type="chains" value="A/B/C/D=1-5037"/>
</dbReference>
<dbReference type="PDB" id="7TDK">
    <property type="method" value="EM"/>
    <property type="resolution" value="3.80 A"/>
    <property type="chains" value="A/B/C/D=1-5037"/>
</dbReference>
<dbReference type="PDB" id="7TZC">
    <property type="method" value="EM"/>
    <property type="resolution" value="2.45 A"/>
    <property type="chains" value="A/B/G/I=1-5037"/>
</dbReference>
<dbReference type="PDB" id="8DRP">
    <property type="method" value="EM"/>
    <property type="resolution" value="2.84 A"/>
    <property type="chains" value="A/B/C/D=1-5037"/>
</dbReference>
<dbReference type="PDB" id="8DTB">
    <property type="method" value="EM"/>
    <property type="resolution" value="3.14 A"/>
    <property type="chains" value="A/D/G/J=1-5037"/>
</dbReference>
<dbReference type="PDB" id="8DUJ">
    <property type="method" value="EM"/>
    <property type="resolution" value="3.70 A"/>
    <property type="chains" value="A/D/G/J=1-5037"/>
</dbReference>
<dbReference type="PDB" id="8DVE">
    <property type="method" value="EM"/>
    <property type="resolution" value="3.84 A"/>
    <property type="chains" value="A/D/G/J=1-5037"/>
</dbReference>
<dbReference type="PDB" id="8RRT">
    <property type="method" value="EM"/>
    <property type="resolution" value="4.60 A"/>
    <property type="chains" value="B/E/G/J=11-5037"/>
</dbReference>
<dbReference type="PDB" id="8RRU">
    <property type="method" value="EM"/>
    <property type="resolution" value="4.70 A"/>
    <property type="chains" value="B/E/G/J=11-5037"/>
</dbReference>
<dbReference type="PDB" id="8RRV">
    <property type="method" value="EM"/>
    <property type="resolution" value="3.20 A"/>
    <property type="chains" value="B/E/G/J=1-5037"/>
</dbReference>
<dbReference type="PDB" id="8RRW">
    <property type="method" value="EM"/>
    <property type="resolution" value="4.20 A"/>
    <property type="chains" value="B/E/G/J=11-5037"/>
</dbReference>
<dbReference type="PDB" id="8RRX">
    <property type="method" value="EM"/>
    <property type="resolution" value="3.10 A"/>
    <property type="chains" value="A/D/G/I=11-5037"/>
</dbReference>
<dbReference type="PDB" id="8RS0">
    <property type="method" value="EM"/>
    <property type="resolution" value="3.30 A"/>
    <property type="chains" value="B/E/G/J=11-5037"/>
</dbReference>
<dbReference type="PDB" id="8SEN">
    <property type="method" value="EM"/>
    <property type="resolution" value="3.49 A"/>
    <property type="chains" value="A/B/C/D=1-5037"/>
</dbReference>
<dbReference type="PDB" id="8SEO">
    <property type="method" value="EM"/>
    <property type="resolution" value="3.92 A"/>
    <property type="chains" value="A/B/C/D=1-5037"/>
</dbReference>
<dbReference type="PDB" id="8SEP">
    <property type="method" value="EM"/>
    <property type="resolution" value="3.57 A"/>
    <property type="chains" value="A/B/C/D=1-5037"/>
</dbReference>
<dbReference type="PDB" id="8SEQ">
    <property type="method" value="EM"/>
    <property type="resolution" value="3.40 A"/>
    <property type="chains" value="A/B/C/D=1-5037"/>
</dbReference>
<dbReference type="PDB" id="8SER">
    <property type="method" value="EM"/>
    <property type="resolution" value="3.42 A"/>
    <property type="chains" value="A/B/C/D=1-5037"/>
</dbReference>
<dbReference type="PDB" id="8SES">
    <property type="method" value="EM"/>
    <property type="resolution" value="3.98 A"/>
    <property type="chains" value="A/B/C/D=1-5037"/>
</dbReference>
<dbReference type="PDB" id="8SET">
    <property type="method" value="EM"/>
    <property type="resolution" value="3.42 A"/>
    <property type="chains" value="A/B/C/D=1-5037"/>
</dbReference>
<dbReference type="PDB" id="8SEU">
    <property type="method" value="EM"/>
    <property type="resolution" value="3.00 A"/>
    <property type="chains" value="A/B/C/D=1-5037"/>
</dbReference>
<dbReference type="PDB" id="8SEV">
    <property type="method" value="EM"/>
    <property type="resolution" value="3.17 A"/>
    <property type="chains" value="A/B/C/D=1-5037"/>
</dbReference>
<dbReference type="PDB" id="8SEW">
    <property type="method" value="EM"/>
    <property type="resolution" value="2.89 A"/>
    <property type="chains" value="A/B/C/D=1-5037"/>
</dbReference>
<dbReference type="PDB" id="8SEX">
    <property type="method" value="EM"/>
    <property type="resolution" value="2.84 A"/>
    <property type="chains" value="A/B/C/D=1-5037"/>
</dbReference>
<dbReference type="PDB" id="8SEY">
    <property type="method" value="EM"/>
    <property type="resolution" value="2.99 A"/>
    <property type="chains" value="A/B/C/D=1-5037"/>
</dbReference>
<dbReference type="PDB" id="8SEZ">
    <property type="method" value="EM"/>
    <property type="resolution" value="3.54 A"/>
    <property type="chains" value="A/B/C/D=1-5037"/>
</dbReference>
<dbReference type="PDB" id="8SF0">
    <property type="method" value="EM"/>
    <property type="resolution" value="2.90 A"/>
    <property type="chains" value="A/B/C/D=1-5037"/>
</dbReference>
<dbReference type="PDB" id="8XJI">
    <property type="method" value="EM"/>
    <property type="resolution" value="3.91 A"/>
    <property type="chains" value="A/B/C/D=1-5037"/>
</dbReference>
<dbReference type="PDB" id="8XKH">
    <property type="method" value="EM"/>
    <property type="resolution" value="3.87 A"/>
    <property type="chains" value="A/B/C/D=1-5037"/>
</dbReference>
<dbReference type="PDB" id="8XLF">
    <property type="method" value="EM"/>
    <property type="resolution" value="3.62 A"/>
    <property type="chains" value="A/B/C/D=1-5037"/>
</dbReference>
<dbReference type="PDB" id="8XLH">
    <property type="method" value="EM"/>
    <property type="resolution" value="3.62 A"/>
    <property type="chains" value="A/B/C/D=1-5037"/>
</dbReference>
<dbReference type="PDB" id="8Y40">
    <property type="method" value="EM"/>
    <property type="resolution" value="3.58 A"/>
    <property type="chains" value="A/B/C/D=1-5037"/>
</dbReference>
<dbReference type="PDB" id="9CGP">
    <property type="method" value="EM"/>
    <property type="resolution" value="3.34 A"/>
    <property type="chains" value="A/B/C/D=1-5037"/>
</dbReference>
<dbReference type="PDB" id="9CGQ">
    <property type="method" value="EM"/>
    <property type="resolution" value="3.23 A"/>
    <property type="chains" value="A/B/C/D=1-5037"/>
</dbReference>
<dbReference type="PDB" id="9E17">
    <property type="method" value="EM"/>
    <property type="resolution" value="2.45 A"/>
    <property type="chains" value="A/B/G/I=1-5037"/>
</dbReference>
<dbReference type="PDB" id="9E18">
    <property type="method" value="EM"/>
    <property type="resolution" value="2.68 A"/>
    <property type="chains" value="A/B/C/D=1-5037"/>
</dbReference>
<dbReference type="PDB" id="9E19">
    <property type="method" value="EM"/>
    <property type="resolution" value="4.04 A"/>
    <property type="chains" value="A/B/C/D=1-5037"/>
</dbReference>
<dbReference type="PDB" id="9E1A">
    <property type="method" value="EM"/>
    <property type="resolution" value="3.35 A"/>
    <property type="chains" value="A/B/C/D=1-5037"/>
</dbReference>
<dbReference type="PDB" id="9E1B">
    <property type="method" value="EM"/>
    <property type="resolution" value="4.49 A"/>
    <property type="chains" value="A/B/C/D=1-5037"/>
</dbReference>
<dbReference type="PDB" id="9E1C">
    <property type="method" value="EM"/>
    <property type="resolution" value="2.63 A"/>
    <property type="chains" value="A/B/C/D=1-5037"/>
</dbReference>
<dbReference type="PDB" id="9E1D">
    <property type="method" value="EM"/>
    <property type="resolution" value="2.76 A"/>
    <property type="chains" value="A/B/C/D=1-5037"/>
</dbReference>
<dbReference type="PDB" id="9E1E">
    <property type="method" value="EM"/>
    <property type="resolution" value="2.92 A"/>
    <property type="chains" value="A/B/C/D=1-5037"/>
</dbReference>
<dbReference type="PDB" id="9E1F">
    <property type="method" value="EM"/>
    <property type="resolution" value="3.03 A"/>
    <property type="chains" value="A/B/C/D=1-5037"/>
</dbReference>
<dbReference type="PDB" id="9E1G">
    <property type="method" value="EM"/>
    <property type="resolution" value="3.17 A"/>
    <property type="chains" value="A/B/C/D=1-5037"/>
</dbReference>
<dbReference type="PDB" id="9E1H">
    <property type="method" value="EM"/>
    <property type="resolution" value="3.26 A"/>
    <property type="chains" value="A/B/C/D=1-5037"/>
</dbReference>
<dbReference type="PDB" id="9E1I">
    <property type="method" value="EM"/>
    <property type="resolution" value="3.20 A"/>
    <property type="chains" value="A/B/C/D=1-5037"/>
</dbReference>
<dbReference type="PDBsum" id="2BCX"/>
<dbReference type="PDBsum" id="2XOA"/>
<dbReference type="PDBsum" id="3HSM"/>
<dbReference type="PDBsum" id="3ILA"/>
<dbReference type="PDBsum" id="3J8H"/>
<dbReference type="PDBsum" id="3RQR"/>
<dbReference type="PDBsum" id="4ERT"/>
<dbReference type="PDBsum" id="4ESU"/>
<dbReference type="PDBsum" id="4ETT"/>
<dbReference type="PDBsum" id="4ETU"/>
<dbReference type="PDBsum" id="4I0Y"/>
<dbReference type="PDBsum" id="4I1E"/>
<dbReference type="PDBsum" id="4I2S"/>
<dbReference type="PDBsum" id="4I37"/>
<dbReference type="PDBsum" id="4I3N"/>
<dbReference type="PDBsum" id="4I6I"/>
<dbReference type="PDBsum" id="4I7I"/>
<dbReference type="PDBsum" id="4I8M"/>
<dbReference type="PDBsum" id="4I96"/>
<dbReference type="PDBsum" id="4P9J"/>
<dbReference type="PDBsum" id="4UWA"/>
<dbReference type="PDBsum" id="4UWE"/>
<dbReference type="PDBsum" id="5C30"/>
<dbReference type="PDBsum" id="5GKY"/>
<dbReference type="PDBsum" id="5GKZ"/>
<dbReference type="PDBsum" id="5GL0"/>
<dbReference type="PDBsum" id="5GL1"/>
<dbReference type="PDBsum" id="5J8V"/>
<dbReference type="PDBsum" id="5T15"/>
<dbReference type="PDBsum" id="5T9M"/>
<dbReference type="PDBsum" id="5T9N"/>
<dbReference type="PDBsum" id="5T9R"/>
<dbReference type="PDBsum" id="5T9S"/>
<dbReference type="PDBsum" id="5T9V"/>
<dbReference type="PDBsum" id="5TA3"/>
<dbReference type="PDBsum" id="5TAL"/>
<dbReference type="PDBsum" id="5TAM"/>
<dbReference type="PDBsum" id="5TAN"/>
<dbReference type="PDBsum" id="5TAP"/>
<dbReference type="PDBsum" id="5TAQ"/>
<dbReference type="PDBsum" id="5TAS"/>
<dbReference type="PDBsum" id="5TAT"/>
<dbReference type="PDBsum" id="5TAU"/>
<dbReference type="PDBsum" id="5TAV"/>
<dbReference type="PDBsum" id="5TAW"/>
<dbReference type="PDBsum" id="5TAX"/>
<dbReference type="PDBsum" id="5TAY"/>
<dbReference type="PDBsum" id="5TAZ"/>
<dbReference type="PDBsum" id="5TB0"/>
<dbReference type="PDBsum" id="5TB1"/>
<dbReference type="PDBsum" id="5TB2"/>
<dbReference type="PDBsum" id="5TB3"/>
<dbReference type="PDBsum" id="5TB4"/>
<dbReference type="PDBsum" id="6FG3"/>
<dbReference type="PDBsum" id="6FOO"/>
<dbReference type="PDBsum" id="6M2W"/>
<dbReference type="PDBsum" id="6WOT"/>
<dbReference type="PDBsum" id="7CF9"/>
<dbReference type="PDBsum" id="7M6A"/>
<dbReference type="PDBsum" id="7M6L"/>
<dbReference type="PDBsum" id="7T64"/>
<dbReference type="PDBsum" id="7T65"/>
<dbReference type="PDBsum" id="7TDG"/>
<dbReference type="PDBsum" id="7TDH"/>
<dbReference type="PDBsum" id="7TDI"/>
<dbReference type="PDBsum" id="7TDJ"/>
<dbReference type="PDBsum" id="7TDK"/>
<dbReference type="PDBsum" id="7TZC"/>
<dbReference type="PDBsum" id="8DRP"/>
<dbReference type="PDBsum" id="8DTB"/>
<dbReference type="PDBsum" id="8DUJ"/>
<dbReference type="PDBsum" id="8DVE"/>
<dbReference type="PDBsum" id="8RRT"/>
<dbReference type="PDBsum" id="8RRU"/>
<dbReference type="PDBsum" id="8RRV"/>
<dbReference type="PDBsum" id="8RRW"/>
<dbReference type="PDBsum" id="8RRX"/>
<dbReference type="PDBsum" id="8RS0"/>
<dbReference type="PDBsum" id="8SEN"/>
<dbReference type="PDBsum" id="8SEO"/>
<dbReference type="PDBsum" id="8SEP"/>
<dbReference type="PDBsum" id="8SEQ"/>
<dbReference type="PDBsum" id="8SER"/>
<dbReference type="PDBsum" id="8SES"/>
<dbReference type="PDBsum" id="8SET"/>
<dbReference type="PDBsum" id="8SEU"/>
<dbReference type="PDBsum" id="8SEV"/>
<dbReference type="PDBsum" id="8SEW"/>
<dbReference type="PDBsum" id="8SEX"/>
<dbReference type="PDBsum" id="8SEY"/>
<dbReference type="PDBsum" id="8SEZ"/>
<dbReference type="PDBsum" id="8SF0"/>
<dbReference type="PDBsum" id="8XJI"/>
<dbReference type="PDBsum" id="8XKH"/>
<dbReference type="PDBsum" id="8XLF"/>
<dbReference type="PDBsum" id="8XLH"/>
<dbReference type="PDBsum" id="8Y40"/>
<dbReference type="PDBsum" id="9CGP"/>
<dbReference type="PDBsum" id="9CGQ"/>
<dbReference type="PDBsum" id="9E17"/>
<dbReference type="PDBsum" id="9E18"/>
<dbReference type="PDBsum" id="9E19"/>
<dbReference type="PDBsum" id="9E1A"/>
<dbReference type="PDBsum" id="9E1B"/>
<dbReference type="PDBsum" id="9E1C"/>
<dbReference type="PDBsum" id="9E1D"/>
<dbReference type="PDBsum" id="9E1E"/>
<dbReference type="PDBsum" id="9E1F"/>
<dbReference type="PDBsum" id="9E1G"/>
<dbReference type="PDBsum" id="9E1H"/>
<dbReference type="PDBsum" id="9E1I"/>
<dbReference type="EMDB" id="EMD-19464"/>
<dbReference type="EMDB" id="EMD-19465"/>
<dbReference type="EMDB" id="EMD-19466"/>
<dbReference type="EMDB" id="EMD-19467"/>
<dbReference type="EMDB" id="EMD-19468"/>
<dbReference type="EMDB" id="EMD-19472"/>
<dbReference type="EMDB" id="EMD-19486"/>
<dbReference type="EMDB" id="EMD-19487"/>
<dbReference type="EMDB" id="EMD-20486"/>
<dbReference type="EMDB" id="EMD-21860"/>
<dbReference type="EMDB" id="EMD-22392"/>
<dbReference type="EMDB" id="EMD-22393"/>
<dbReference type="EMDB" id="EMD-22394"/>
<dbReference type="EMDB" id="EMD-22395"/>
<dbReference type="EMDB" id="EMD-22396"/>
<dbReference type="EMDB" id="EMD-22596"/>
<dbReference type="EMDB" id="EMD-22597"/>
<dbReference type="EMDB" id="EMD-22615"/>
<dbReference type="EMDB" id="EMD-22616"/>
<dbReference type="EMDB" id="EMD-23692"/>
<dbReference type="EMDB" id="EMD-23699"/>
<dbReference type="EMDB" id="EMD-25709"/>
<dbReference type="EMDB" id="EMD-25710"/>
<dbReference type="EMDB" id="EMD-25828"/>
<dbReference type="EMDB" id="EMD-25829"/>
<dbReference type="EMDB" id="EMD-25830"/>
<dbReference type="EMDB" id="EMD-25831"/>
<dbReference type="EMDB" id="EMD-25832"/>
<dbReference type="EMDB" id="EMD-25833"/>
<dbReference type="EMDB" id="EMD-26205"/>
<dbReference type="EMDB" id="EMD-26610"/>
<dbReference type="EMDB" id="EMD-2751"/>
<dbReference type="EMDB" id="EMD-2752"/>
<dbReference type="EMDB" id="EMD-27680"/>
<dbReference type="EMDB" id="EMD-27695"/>
<dbReference type="EMDB" id="EMD-27721"/>
<dbReference type="EMDB" id="EMD-27736"/>
<dbReference type="EMDB" id="EMD-2807"/>
<dbReference type="EMDB" id="EMD-30067"/>
<dbReference type="EMDB" id="EMD-30343"/>
<dbReference type="EMDB" id="EMD-38042"/>
<dbReference type="EMDB" id="EMD-38043"/>
<dbReference type="EMDB" id="EMD-38044"/>
<dbReference type="EMDB" id="EMD-38045"/>
<dbReference type="EMDB" id="EMD-38046"/>
<dbReference type="EMDB" id="EMD-38047"/>
<dbReference type="EMDB" id="EMD-38048"/>
<dbReference type="EMDB" id="EMD-38398"/>
<dbReference type="EMDB" id="EMD-38417"/>
<dbReference type="EMDB" id="EMD-38447"/>
<dbReference type="EMDB" id="EMD-38448"/>
<dbReference type="EMDB" id="EMD-38908"/>
<dbReference type="EMDB" id="EMD-40422"/>
<dbReference type="EMDB" id="EMD-40423"/>
<dbReference type="EMDB" id="EMD-40424"/>
<dbReference type="EMDB" id="EMD-40425"/>
<dbReference type="EMDB" id="EMD-40426"/>
<dbReference type="EMDB" id="EMD-40427"/>
<dbReference type="EMDB" id="EMD-40428"/>
<dbReference type="EMDB" id="EMD-40429"/>
<dbReference type="EMDB" id="EMD-40430"/>
<dbReference type="EMDB" id="EMD-40431"/>
<dbReference type="EMDB" id="EMD-40432"/>
<dbReference type="EMDB" id="EMD-40433"/>
<dbReference type="EMDB" id="EMD-40434"/>
<dbReference type="EMDB" id="EMD-40435"/>
<dbReference type="EMDB" id="EMD-4258"/>
<dbReference type="EMDB" id="EMD-4295"/>
<dbReference type="EMDB" id="EMD-45493"/>
<dbReference type="EMDB" id="EMD-45497"/>
<dbReference type="EMDB" id="EMD-45584"/>
<dbReference type="EMDB" id="EMD-45585"/>
<dbReference type="EMDB" id="EMD-47385"/>
<dbReference type="EMDB" id="EMD-47386"/>
<dbReference type="EMDB" id="EMD-47387"/>
<dbReference type="EMDB" id="EMD-47388"/>
<dbReference type="EMDB" id="EMD-47389"/>
<dbReference type="EMDB" id="EMD-47390"/>
<dbReference type="EMDB" id="EMD-47391"/>
<dbReference type="EMDB" id="EMD-47392"/>
<dbReference type="EMDB" id="EMD-47393"/>
<dbReference type="EMDB" id="EMD-47394"/>
<dbReference type="EMDB" id="EMD-47395"/>
<dbReference type="EMDB" id="EMD-6106"/>
<dbReference type="EMDB" id="EMD-8073"/>
<dbReference type="EMDB" id="EMD-8074"/>
<dbReference type="EMDB" id="EMD-8171"/>
<dbReference type="EMDB" id="EMD-8172"/>
<dbReference type="EMDB" id="EMD-8342"/>
<dbReference type="EMDB" id="EMD-8372"/>
<dbReference type="EMDB" id="EMD-8373"/>
<dbReference type="EMDB" id="EMD-8374"/>
<dbReference type="EMDB" id="EMD-8375"/>
<dbReference type="EMDB" id="EMD-8376"/>
<dbReference type="EMDB" id="EMD-8377"/>
<dbReference type="EMDB" id="EMD-8378"/>
<dbReference type="EMDB" id="EMD-8379"/>
<dbReference type="EMDB" id="EMD-8380"/>
<dbReference type="EMDB" id="EMD-8381"/>
<dbReference type="EMDB" id="EMD-8382"/>
<dbReference type="EMDB" id="EMD-8383"/>
<dbReference type="EMDB" id="EMD-8384"/>
<dbReference type="EMDB" id="EMD-8385"/>
<dbReference type="EMDB" id="EMD-8386"/>
<dbReference type="EMDB" id="EMD-8387"/>
<dbReference type="EMDB" id="EMD-8388"/>
<dbReference type="EMDB" id="EMD-8389"/>
<dbReference type="EMDB" id="EMD-8390"/>
<dbReference type="EMDB" id="EMD-8391"/>
<dbReference type="EMDB" id="EMD-8392"/>
<dbReference type="EMDB" id="EMD-8393"/>
<dbReference type="EMDB" id="EMD-8394"/>
<dbReference type="EMDB" id="EMD-8395"/>
<dbReference type="EMDB" id="EMD-9518"/>
<dbReference type="EMDB" id="EMD-9519"/>
<dbReference type="EMDB" id="EMD-9520"/>
<dbReference type="EMDB" id="EMD-9521"/>
<dbReference type="SMR" id="P11716"/>
<dbReference type="BioGRID" id="1172559">
    <property type="interactions" value="3"/>
</dbReference>
<dbReference type="ComplexPortal" id="CPX-3136">
    <property type="entry name" value="Ryanodine 1 complex"/>
</dbReference>
<dbReference type="DIP" id="DIP-41872N"/>
<dbReference type="FunCoup" id="P11716">
    <property type="interactions" value="53"/>
</dbReference>
<dbReference type="IntAct" id="P11716">
    <property type="interactions" value="8"/>
</dbReference>
<dbReference type="MINT" id="P11716"/>
<dbReference type="STRING" id="9986.ENSOCUP00000025335"/>
<dbReference type="BindingDB" id="P11716"/>
<dbReference type="ChEMBL" id="CHEMBL3288"/>
<dbReference type="iPTMnet" id="P11716"/>
<dbReference type="SwissPalm" id="P11716"/>
<dbReference type="GeneID" id="100009540"/>
<dbReference type="KEGG" id="ocu:100009540"/>
<dbReference type="CTD" id="6261"/>
<dbReference type="InParanoid" id="P11716"/>
<dbReference type="OrthoDB" id="258495at2759"/>
<dbReference type="EvolutionaryTrace" id="P11716"/>
<dbReference type="PRO" id="PR:P11716"/>
<dbReference type="Proteomes" id="UP000001811">
    <property type="component" value="Unplaced"/>
</dbReference>
<dbReference type="GO" id="GO:0016020">
    <property type="term" value="C:membrane"/>
    <property type="evidence" value="ECO:0000314"/>
    <property type="project" value="UniProtKB"/>
</dbReference>
<dbReference type="GO" id="GO:0031090">
    <property type="term" value="C:organelle membrane"/>
    <property type="evidence" value="ECO:0000314"/>
    <property type="project" value="UniProtKB"/>
</dbReference>
<dbReference type="GO" id="GO:1990425">
    <property type="term" value="C:ryanodine receptor complex"/>
    <property type="evidence" value="ECO:0000314"/>
    <property type="project" value="UniProtKB"/>
</dbReference>
<dbReference type="GO" id="GO:0042383">
    <property type="term" value="C:sarcolemma"/>
    <property type="evidence" value="ECO:0007669"/>
    <property type="project" value="TreeGrafter"/>
</dbReference>
<dbReference type="GO" id="GO:0016529">
    <property type="term" value="C:sarcoplasmic reticulum"/>
    <property type="evidence" value="ECO:0000314"/>
    <property type="project" value="UniProtKB"/>
</dbReference>
<dbReference type="GO" id="GO:0033017">
    <property type="term" value="C:sarcoplasmic reticulum membrane"/>
    <property type="evidence" value="ECO:0000314"/>
    <property type="project" value="UniProtKB"/>
</dbReference>
<dbReference type="GO" id="GO:0005790">
    <property type="term" value="C:smooth endoplasmic reticulum"/>
    <property type="evidence" value="ECO:0007669"/>
    <property type="project" value="TreeGrafter"/>
</dbReference>
<dbReference type="GO" id="GO:0014802">
    <property type="term" value="C:terminal cisterna"/>
    <property type="evidence" value="ECO:0000314"/>
    <property type="project" value="BHF-UCL"/>
</dbReference>
<dbReference type="GO" id="GO:0030018">
    <property type="term" value="C:Z disc"/>
    <property type="evidence" value="ECO:0007669"/>
    <property type="project" value="TreeGrafter"/>
</dbReference>
<dbReference type="GO" id="GO:0005524">
    <property type="term" value="F:ATP binding"/>
    <property type="evidence" value="ECO:0000314"/>
    <property type="project" value="UniProtKB"/>
</dbReference>
<dbReference type="GO" id="GO:0035381">
    <property type="term" value="F:ATP-gated ion channel activity"/>
    <property type="evidence" value="ECO:0000314"/>
    <property type="project" value="CAFA"/>
</dbReference>
<dbReference type="GO" id="GO:0005262">
    <property type="term" value="F:calcium channel activity"/>
    <property type="evidence" value="ECO:0000250"/>
    <property type="project" value="UniProtKB"/>
</dbReference>
<dbReference type="GO" id="GO:0005509">
    <property type="term" value="F:calcium ion binding"/>
    <property type="evidence" value="ECO:0000314"/>
    <property type="project" value="UniProtKB"/>
</dbReference>
<dbReference type="GO" id="GO:0005516">
    <property type="term" value="F:calmodulin binding"/>
    <property type="evidence" value="ECO:0000314"/>
    <property type="project" value="BHF-UCL"/>
</dbReference>
<dbReference type="GO" id="GO:0097718">
    <property type="term" value="F:disordered domain specific binding"/>
    <property type="evidence" value="ECO:0000353"/>
    <property type="project" value="CAFA"/>
</dbReference>
<dbReference type="GO" id="GO:0042802">
    <property type="term" value="F:identical protein binding"/>
    <property type="evidence" value="ECO:0000353"/>
    <property type="project" value="IntAct"/>
</dbReference>
<dbReference type="GO" id="GO:0015278">
    <property type="term" value="F:intracellularly gated calcium channel activity"/>
    <property type="evidence" value="ECO:0000315"/>
    <property type="project" value="AgBase"/>
</dbReference>
<dbReference type="GO" id="GO:0005219">
    <property type="term" value="F:ryanodine-sensitive calcium-release channel activity"/>
    <property type="evidence" value="ECO:0000314"/>
    <property type="project" value="UniProtKB"/>
</dbReference>
<dbReference type="GO" id="GO:0015643">
    <property type="term" value="F:toxic substance binding"/>
    <property type="evidence" value="ECO:0000314"/>
    <property type="project" value="AgBase"/>
</dbReference>
<dbReference type="GO" id="GO:0044325">
    <property type="term" value="F:transmembrane transporter binding"/>
    <property type="evidence" value="ECO:0000353"/>
    <property type="project" value="BHF-UCL"/>
</dbReference>
<dbReference type="GO" id="GO:0005245">
    <property type="term" value="F:voltage-gated calcium channel activity"/>
    <property type="evidence" value="ECO:0000250"/>
    <property type="project" value="UniProtKB"/>
</dbReference>
<dbReference type="GO" id="GO:0070588">
    <property type="term" value="P:calcium ion transmembrane transport"/>
    <property type="evidence" value="ECO:0000314"/>
    <property type="project" value="UniProtKB"/>
</dbReference>
<dbReference type="GO" id="GO:0071313">
    <property type="term" value="P:cellular response to caffeine"/>
    <property type="evidence" value="ECO:0000314"/>
    <property type="project" value="UniProtKB"/>
</dbReference>
<dbReference type="GO" id="GO:0071277">
    <property type="term" value="P:cellular response to calcium ion"/>
    <property type="evidence" value="ECO:0000314"/>
    <property type="project" value="UniProtKB"/>
</dbReference>
<dbReference type="GO" id="GO:0006874">
    <property type="term" value="P:intracellular calcium ion homeostasis"/>
    <property type="evidence" value="ECO:0007669"/>
    <property type="project" value="InterPro"/>
</dbReference>
<dbReference type="GO" id="GO:0006936">
    <property type="term" value="P:muscle contraction"/>
    <property type="evidence" value="ECO:0000250"/>
    <property type="project" value="UniProtKB"/>
</dbReference>
<dbReference type="GO" id="GO:0043931">
    <property type="term" value="P:ossification involved in bone maturation"/>
    <property type="evidence" value="ECO:0000250"/>
    <property type="project" value="UniProtKB"/>
</dbReference>
<dbReference type="GO" id="GO:0003151">
    <property type="term" value="P:outflow tract morphogenesis"/>
    <property type="evidence" value="ECO:0000250"/>
    <property type="project" value="UniProtKB"/>
</dbReference>
<dbReference type="GO" id="GO:0051289">
    <property type="term" value="P:protein homotetramerization"/>
    <property type="evidence" value="ECO:0000314"/>
    <property type="project" value="UniProtKB"/>
</dbReference>
<dbReference type="GO" id="GO:0051209">
    <property type="term" value="P:release of sequestered calcium ion into cytosol"/>
    <property type="evidence" value="ECO:0000314"/>
    <property type="project" value="CAFA"/>
</dbReference>
<dbReference type="GO" id="GO:0014808">
    <property type="term" value="P:release of sequestered calcium ion into cytosol by sarcoplasmic reticulum"/>
    <property type="evidence" value="ECO:0000315"/>
    <property type="project" value="UniProtKB"/>
</dbReference>
<dbReference type="GO" id="GO:0048741">
    <property type="term" value="P:skeletal muscle fiber development"/>
    <property type="evidence" value="ECO:0000250"/>
    <property type="project" value="UniProtKB"/>
</dbReference>
<dbReference type="GO" id="GO:0043588">
    <property type="term" value="P:skin development"/>
    <property type="evidence" value="ECO:0000250"/>
    <property type="project" value="UniProtKB"/>
</dbReference>
<dbReference type="GO" id="GO:0006941">
    <property type="term" value="P:striated muscle contraction"/>
    <property type="evidence" value="ECO:0007669"/>
    <property type="project" value="TreeGrafter"/>
</dbReference>
<dbReference type="CDD" id="cd23290">
    <property type="entry name" value="beta-trefoil_MIR_RyR1"/>
    <property type="match status" value="1"/>
</dbReference>
<dbReference type="CDD" id="cd12877">
    <property type="entry name" value="SPRY1_RyR"/>
    <property type="match status" value="1"/>
</dbReference>
<dbReference type="CDD" id="cd12878">
    <property type="entry name" value="SPRY2_RyR"/>
    <property type="match status" value="1"/>
</dbReference>
<dbReference type="CDD" id="cd12879">
    <property type="entry name" value="SPRY3_RyR"/>
    <property type="match status" value="1"/>
</dbReference>
<dbReference type="FunFam" id="1.10.490.160:FF:000008">
    <property type="match status" value="1"/>
</dbReference>
<dbReference type="FunFam" id="2.60.120.920:FF:000019">
    <property type="entry name" value="Ryanodine receptor 1 (skeletal)"/>
    <property type="match status" value="1"/>
</dbReference>
<dbReference type="FunFam" id="2.80.10.50:FF:000009">
    <property type="entry name" value="Ryanodine receptor 1 (skeletal)"/>
    <property type="match status" value="1"/>
</dbReference>
<dbReference type="FunFam" id="1.10.490.160:FF:000001">
    <property type="entry name" value="Ryanodine receptor 2 (Cardiac)"/>
    <property type="match status" value="1"/>
</dbReference>
<dbReference type="FunFam" id="2.80.10.50:FF:000006">
    <property type="entry name" value="Ryanodine receptor 2 (Cardiac)"/>
    <property type="match status" value="1"/>
</dbReference>
<dbReference type="FunFam" id="1.10.287.70:FF:000017">
    <property type="entry name" value="ryanodine receptor isoform X2"/>
    <property type="match status" value="1"/>
</dbReference>
<dbReference type="FunFam" id="1.25.10.30:FF:000002">
    <property type="entry name" value="ryanodine receptor isoform X2"/>
    <property type="match status" value="1"/>
</dbReference>
<dbReference type="FunFam" id="2.60.120.920:FF:000002">
    <property type="entry name" value="ryanodine receptor isoform X2"/>
    <property type="match status" value="1"/>
</dbReference>
<dbReference type="FunFam" id="2.60.120.920:FF:000003">
    <property type="entry name" value="ryanodine receptor isoform X2"/>
    <property type="match status" value="1"/>
</dbReference>
<dbReference type="Gene3D" id="1.10.287.70">
    <property type="match status" value="1"/>
</dbReference>
<dbReference type="Gene3D" id="1.10.490.160">
    <property type="match status" value="2"/>
</dbReference>
<dbReference type="Gene3D" id="2.60.120.920">
    <property type="match status" value="3"/>
</dbReference>
<dbReference type="Gene3D" id="2.80.10.50">
    <property type="match status" value="2"/>
</dbReference>
<dbReference type="Gene3D" id="6.20.350.10">
    <property type="match status" value="1"/>
</dbReference>
<dbReference type="Gene3D" id="1.25.10.30">
    <property type="entry name" value="IP3 receptor type 1 binding core, RIH domain"/>
    <property type="match status" value="1"/>
</dbReference>
<dbReference type="InterPro" id="IPR001870">
    <property type="entry name" value="B30.2/SPRY"/>
</dbReference>
<dbReference type="InterPro" id="IPR043136">
    <property type="entry name" value="B30.2/SPRY_sf"/>
</dbReference>
<dbReference type="InterPro" id="IPR013320">
    <property type="entry name" value="ConA-like_dom_sf"/>
</dbReference>
<dbReference type="InterPro" id="IPR011992">
    <property type="entry name" value="EF-hand-dom_pair"/>
</dbReference>
<dbReference type="InterPro" id="IPR014821">
    <property type="entry name" value="Ins145_P3_rcpt"/>
</dbReference>
<dbReference type="InterPro" id="IPR005821">
    <property type="entry name" value="Ion_trans_dom"/>
</dbReference>
<dbReference type="InterPro" id="IPR036300">
    <property type="entry name" value="MIR_dom_sf"/>
</dbReference>
<dbReference type="InterPro" id="IPR016093">
    <property type="entry name" value="MIR_motif"/>
</dbReference>
<dbReference type="InterPro" id="IPR013662">
    <property type="entry name" value="RIH_assoc-dom"/>
</dbReference>
<dbReference type="InterPro" id="IPR000699">
    <property type="entry name" value="RIH_dom"/>
</dbReference>
<dbReference type="InterPro" id="IPR013333">
    <property type="entry name" value="Ryan_recept"/>
</dbReference>
<dbReference type="InterPro" id="IPR015925">
    <property type="entry name" value="Ryanodine_IP3_receptor"/>
</dbReference>
<dbReference type="InterPro" id="IPR003032">
    <property type="entry name" value="Ryanodine_rcpt"/>
</dbReference>
<dbReference type="InterPro" id="IPR009460">
    <property type="entry name" value="Ryanrecept_TM4-6"/>
</dbReference>
<dbReference type="InterPro" id="IPR048581">
    <property type="entry name" value="RYDR_Jsol"/>
</dbReference>
<dbReference type="InterPro" id="IPR035910">
    <property type="entry name" value="RyR/IP3R_RIH_dom_sf"/>
</dbReference>
<dbReference type="InterPro" id="IPR035761">
    <property type="entry name" value="SPRY1_RyR"/>
</dbReference>
<dbReference type="InterPro" id="IPR035764">
    <property type="entry name" value="SPRY2_RyR"/>
</dbReference>
<dbReference type="InterPro" id="IPR035762">
    <property type="entry name" value="SPRY3_RyR"/>
</dbReference>
<dbReference type="InterPro" id="IPR003877">
    <property type="entry name" value="SPRY_dom"/>
</dbReference>
<dbReference type="PANTHER" id="PTHR46399">
    <property type="entry name" value="B30.2/SPRY DOMAIN-CONTAINING PROTEIN"/>
    <property type="match status" value="1"/>
</dbReference>
<dbReference type="PANTHER" id="PTHR46399:SF10">
    <property type="entry name" value="RYANODINE RECEPTOR 1"/>
    <property type="match status" value="1"/>
</dbReference>
<dbReference type="Pfam" id="PF08709">
    <property type="entry name" value="Ins145_P3_rec"/>
    <property type="match status" value="1"/>
</dbReference>
<dbReference type="Pfam" id="PF00520">
    <property type="entry name" value="Ion_trans"/>
    <property type="match status" value="1"/>
</dbReference>
<dbReference type="Pfam" id="PF02815">
    <property type="entry name" value="MIR"/>
    <property type="match status" value="1"/>
</dbReference>
<dbReference type="Pfam" id="PF08454">
    <property type="entry name" value="RIH_assoc"/>
    <property type="match status" value="1"/>
</dbReference>
<dbReference type="Pfam" id="PF06459">
    <property type="entry name" value="RR_TM4-6"/>
    <property type="match status" value="1"/>
</dbReference>
<dbReference type="Pfam" id="PF01365">
    <property type="entry name" value="RYDR_ITPR"/>
    <property type="match status" value="2"/>
</dbReference>
<dbReference type="Pfam" id="PF21119">
    <property type="entry name" value="RYDR_Jsol"/>
    <property type="match status" value="1"/>
</dbReference>
<dbReference type="Pfam" id="PF02026">
    <property type="entry name" value="RyR"/>
    <property type="match status" value="4"/>
</dbReference>
<dbReference type="Pfam" id="PF00622">
    <property type="entry name" value="SPRY"/>
    <property type="match status" value="3"/>
</dbReference>
<dbReference type="PRINTS" id="PR00795">
    <property type="entry name" value="RYANODINER"/>
</dbReference>
<dbReference type="SMART" id="SM00472">
    <property type="entry name" value="MIR"/>
    <property type="match status" value="4"/>
</dbReference>
<dbReference type="SMART" id="SM00449">
    <property type="entry name" value="SPRY"/>
    <property type="match status" value="3"/>
</dbReference>
<dbReference type="SUPFAM" id="SSF49899">
    <property type="entry name" value="Concanavalin A-like lectins/glucanases"/>
    <property type="match status" value="3"/>
</dbReference>
<dbReference type="SUPFAM" id="SSF47473">
    <property type="entry name" value="EF-hand"/>
    <property type="match status" value="1"/>
</dbReference>
<dbReference type="SUPFAM" id="SSF100909">
    <property type="entry name" value="IP3 receptor type 1 binding core, domain 2"/>
    <property type="match status" value="1"/>
</dbReference>
<dbReference type="SUPFAM" id="SSF82109">
    <property type="entry name" value="MIR domain"/>
    <property type="match status" value="2"/>
</dbReference>
<dbReference type="PROSITE" id="PS50188">
    <property type="entry name" value="B302_SPRY"/>
    <property type="match status" value="3"/>
</dbReference>
<dbReference type="PROSITE" id="PS50919">
    <property type="entry name" value="MIR"/>
    <property type="match status" value="5"/>
</dbReference>
<keyword id="KW-0002">3D-structure</keyword>
<keyword id="KW-0067">ATP-binding</keyword>
<keyword id="KW-0106">Calcium</keyword>
<keyword id="KW-0107">Calcium channel</keyword>
<keyword id="KW-0109">Calcium transport</keyword>
<keyword id="KW-0112">Calmodulin-binding</keyword>
<keyword id="KW-0217">Developmental protein</keyword>
<keyword id="KW-0903">Direct protein sequencing</keyword>
<keyword id="KW-0407">Ion channel</keyword>
<keyword id="KW-0406">Ion transport</keyword>
<keyword id="KW-1071">Ligand-gated ion channel</keyword>
<keyword id="KW-0472">Membrane</keyword>
<keyword id="KW-0479">Metal-binding</keyword>
<keyword id="KW-0547">Nucleotide-binding</keyword>
<keyword id="KW-0597">Phosphoprotein</keyword>
<keyword id="KW-0675">Receptor</keyword>
<keyword id="KW-1185">Reference proteome</keyword>
<keyword id="KW-0677">Repeat</keyword>
<keyword id="KW-0702">S-nitrosylation</keyword>
<keyword id="KW-0703">Sarcoplasmic reticulum</keyword>
<keyword id="KW-0812">Transmembrane</keyword>
<keyword id="KW-1133">Transmembrane helix</keyword>
<keyword id="KW-0813">Transport</keyword>